<dbReference type="EC" id="3.4.22.-" evidence="4"/>
<dbReference type="EC" id="3.4.21.98" evidence="6"/>
<dbReference type="EC" id="3.6.1.15" evidence="6"/>
<dbReference type="EC" id="3.6.4.13" evidence="6"/>
<dbReference type="EC" id="2.7.7.48" evidence="6"/>
<dbReference type="EMBL" id="M84754">
    <property type="protein sequence ID" value="ABU97068.1"/>
    <property type="molecule type" value="Genomic_RNA"/>
</dbReference>
<dbReference type="PIR" id="A40244">
    <property type="entry name" value="GNWVTW"/>
</dbReference>
<dbReference type="PIR" id="A61196">
    <property type="entry name" value="A61196"/>
</dbReference>
<dbReference type="PDB" id="1N64">
    <property type="method" value="X-ray"/>
    <property type="resolution" value="2.34 A"/>
    <property type="chains" value="P=25-40"/>
</dbReference>
<dbReference type="PDB" id="2ZJO">
    <property type="method" value="X-ray"/>
    <property type="resolution" value="2.50 A"/>
    <property type="chains" value="A=1193-1657"/>
</dbReference>
<dbReference type="PDBsum" id="1N64"/>
<dbReference type="PDBsum" id="2ZJO"/>
<dbReference type="BMRB" id="P29846"/>
<dbReference type="SMR" id="P29846"/>
<dbReference type="IntAct" id="P29846">
    <property type="interactions" value="5"/>
</dbReference>
<dbReference type="MINT" id="P29846"/>
<dbReference type="BindingDB" id="P29846"/>
<dbReference type="MEROPS" id="S29.001"/>
<dbReference type="ABCD" id="P29846">
    <property type="antibodies" value="1 sequenced antibody"/>
</dbReference>
<dbReference type="euHCVdb" id="M84754"/>
<dbReference type="EvolutionaryTrace" id="P29846"/>
<dbReference type="Proteomes" id="UP000002679">
    <property type="component" value="Genome"/>
</dbReference>
<dbReference type="GO" id="GO:0044167">
    <property type="term" value="C:host cell endoplasmic reticulum membrane"/>
    <property type="evidence" value="ECO:0007669"/>
    <property type="project" value="UniProtKB-SubCell"/>
</dbReference>
<dbReference type="GO" id="GO:0044186">
    <property type="term" value="C:host cell lipid droplet"/>
    <property type="evidence" value="ECO:0007669"/>
    <property type="project" value="UniProtKB-SubCell"/>
</dbReference>
<dbReference type="GO" id="GO:0044191">
    <property type="term" value="C:host cell mitochondrial membrane"/>
    <property type="evidence" value="ECO:0007669"/>
    <property type="project" value="UniProtKB-SubCell"/>
</dbReference>
<dbReference type="GO" id="GO:0042025">
    <property type="term" value="C:host cell nucleus"/>
    <property type="evidence" value="ECO:0007669"/>
    <property type="project" value="UniProtKB-SubCell"/>
</dbReference>
<dbReference type="GO" id="GO:0044220">
    <property type="term" value="C:host cell perinuclear region of cytoplasm"/>
    <property type="evidence" value="ECO:0007669"/>
    <property type="project" value="UniProtKB-SubCell"/>
</dbReference>
<dbReference type="GO" id="GO:0020002">
    <property type="term" value="C:host cell plasma membrane"/>
    <property type="evidence" value="ECO:0007669"/>
    <property type="project" value="UniProtKB-SubCell"/>
</dbReference>
<dbReference type="GO" id="GO:0016020">
    <property type="term" value="C:membrane"/>
    <property type="evidence" value="ECO:0007669"/>
    <property type="project" value="UniProtKB-KW"/>
</dbReference>
<dbReference type="GO" id="GO:1990904">
    <property type="term" value="C:ribonucleoprotein complex"/>
    <property type="evidence" value="ECO:0007669"/>
    <property type="project" value="UniProtKB-KW"/>
</dbReference>
<dbReference type="GO" id="GO:0019031">
    <property type="term" value="C:viral envelope"/>
    <property type="evidence" value="ECO:0007669"/>
    <property type="project" value="UniProtKB-KW"/>
</dbReference>
<dbReference type="GO" id="GO:0019013">
    <property type="term" value="C:viral nucleocapsid"/>
    <property type="evidence" value="ECO:0007669"/>
    <property type="project" value="UniProtKB-KW"/>
</dbReference>
<dbReference type="GO" id="GO:0055036">
    <property type="term" value="C:virion membrane"/>
    <property type="evidence" value="ECO:0007669"/>
    <property type="project" value="UniProtKB-SubCell"/>
</dbReference>
<dbReference type="GO" id="GO:0005524">
    <property type="term" value="F:ATP binding"/>
    <property type="evidence" value="ECO:0007669"/>
    <property type="project" value="UniProtKB-KW"/>
</dbReference>
<dbReference type="GO" id="GO:0016887">
    <property type="term" value="F:ATP hydrolysis activity"/>
    <property type="evidence" value="ECO:0007669"/>
    <property type="project" value="RHEA"/>
</dbReference>
<dbReference type="GO" id="GO:0015267">
    <property type="term" value="F:channel activity"/>
    <property type="evidence" value="ECO:0007669"/>
    <property type="project" value="UniProtKB-KW"/>
</dbReference>
<dbReference type="GO" id="GO:0004197">
    <property type="term" value="F:cysteine-type endopeptidase activity"/>
    <property type="evidence" value="ECO:0007669"/>
    <property type="project" value="InterPro"/>
</dbReference>
<dbReference type="GO" id="GO:0003723">
    <property type="term" value="F:RNA binding"/>
    <property type="evidence" value="ECO:0007669"/>
    <property type="project" value="UniProtKB-KW"/>
</dbReference>
<dbReference type="GO" id="GO:0003724">
    <property type="term" value="F:RNA helicase activity"/>
    <property type="evidence" value="ECO:0007669"/>
    <property type="project" value="UniProtKB-EC"/>
</dbReference>
<dbReference type="GO" id="GO:0003968">
    <property type="term" value="F:RNA-directed RNA polymerase activity"/>
    <property type="evidence" value="ECO:0007669"/>
    <property type="project" value="UniProtKB-KW"/>
</dbReference>
<dbReference type="GO" id="GO:0004252">
    <property type="term" value="F:serine-type endopeptidase activity"/>
    <property type="evidence" value="ECO:0007669"/>
    <property type="project" value="InterPro"/>
</dbReference>
<dbReference type="GO" id="GO:0017124">
    <property type="term" value="F:SH3 domain binding"/>
    <property type="evidence" value="ECO:0007669"/>
    <property type="project" value="UniProtKB-KW"/>
</dbReference>
<dbReference type="GO" id="GO:0005198">
    <property type="term" value="F:structural molecule activity"/>
    <property type="evidence" value="ECO:0007669"/>
    <property type="project" value="InterPro"/>
</dbReference>
<dbReference type="GO" id="GO:0008270">
    <property type="term" value="F:zinc ion binding"/>
    <property type="evidence" value="ECO:0007669"/>
    <property type="project" value="InterPro"/>
</dbReference>
<dbReference type="GO" id="GO:0075512">
    <property type="term" value="P:clathrin-dependent endocytosis of virus by host cell"/>
    <property type="evidence" value="ECO:0007669"/>
    <property type="project" value="UniProtKB-KW"/>
</dbReference>
<dbReference type="GO" id="GO:0039654">
    <property type="term" value="P:fusion of virus membrane with host endosome membrane"/>
    <property type="evidence" value="ECO:0007669"/>
    <property type="project" value="UniProtKB-KW"/>
</dbReference>
<dbReference type="GO" id="GO:0034220">
    <property type="term" value="P:monoatomic ion transmembrane transport"/>
    <property type="evidence" value="ECO:0007669"/>
    <property type="project" value="UniProtKB-KW"/>
</dbReference>
<dbReference type="GO" id="GO:0043433">
    <property type="term" value="P:negative regulation of DNA-binding transcription factor activity"/>
    <property type="evidence" value="ECO:0000314"/>
    <property type="project" value="UniProtKB"/>
</dbReference>
<dbReference type="GO" id="GO:0006508">
    <property type="term" value="P:proteolysis"/>
    <property type="evidence" value="ECO:0007669"/>
    <property type="project" value="UniProtKB-KW"/>
</dbReference>
<dbReference type="GO" id="GO:0039520">
    <property type="term" value="P:symbiont-mediated activation of host autophagy"/>
    <property type="evidence" value="ECO:0007669"/>
    <property type="project" value="UniProtKB-KW"/>
</dbReference>
<dbReference type="GO" id="GO:0039645">
    <property type="term" value="P:symbiont-mediated perturbation of host cell cycle G1/S transition checkpoint"/>
    <property type="evidence" value="ECO:0007669"/>
    <property type="project" value="UniProtKB-KW"/>
</dbReference>
<dbReference type="GO" id="GO:0039545">
    <property type="term" value="P:symbiont-mediated suppression of host cytoplasmic pattern recognition receptor signaling pathway via inhibition of MAVS activity"/>
    <property type="evidence" value="ECO:0007669"/>
    <property type="project" value="UniProtKB-KW"/>
</dbReference>
<dbReference type="GO" id="GO:0039563">
    <property type="term" value="P:symbiont-mediated suppression of host JAK-STAT cascade via inhibition of STAT1 activity"/>
    <property type="evidence" value="ECO:0007669"/>
    <property type="project" value="UniProtKB-KW"/>
</dbReference>
<dbReference type="GO" id="GO:0039527">
    <property type="term" value="P:symbiont-mediated suppression of host TRAF-mediated signal transduction"/>
    <property type="evidence" value="ECO:0007669"/>
    <property type="project" value="UniProtKB-KW"/>
</dbReference>
<dbReference type="GO" id="GO:0039502">
    <property type="term" value="P:symbiont-mediated suppression of host type I interferon-mediated signaling pathway"/>
    <property type="evidence" value="ECO:0007669"/>
    <property type="project" value="UniProtKB-KW"/>
</dbReference>
<dbReference type="GO" id="GO:0019087">
    <property type="term" value="P:symbiont-mediated transformation of host cell"/>
    <property type="evidence" value="ECO:0007669"/>
    <property type="project" value="InterPro"/>
</dbReference>
<dbReference type="GO" id="GO:0039694">
    <property type="term" value="P:viral RNA genome replication"/>
    <property type="evidence" value="ECO:0007669"/>
    <property type="project" value="InterPro"/>
</dbReference>
<dbReference type="GO" id="GO:0019062">
    <property type="term" value="P:virion attachment to host cell"/>
    <property type="evidence" value="ECO:0007669"/>
    <property type="project" value="UniProtKB-KW"/>
</dbReference>
<dbReference type="CDD" id="cd17931">
    <property type="entry name" value="DEXHc_viral_Ns3"/>
    <property type="match status" value="1"/>
</dbReference>
<dbReference type="CDD" id="cd20903">
    <property type="entry name" value="HCV_p7"/>
    <property type="match status" value="1"/>
</dbReference>
<dbReference type="CDD" id="cd23202">
    <property type="entry name" value="Hepacivirus_RdRp"/>
    <property type="match status" value="1"/>
</dbReference>
<dbReference type="FunFam" id="1.10.820.10:FF:000001">
    <property type="entry name" value="Genome polyprotein"/>
    <property type="match status" value="1"/>
</dbReference>
<dbReference type="FunFam" id="1.20.1280.150:FF:000001">
    <property type="entry name" value="Genome polyprotein"/>
    <property type="match status" value="1"/>
</dbReference>
<dbReference type="FunFam" id="2.20.25.210:FF:000001">
    <property type="entry name" value="Genome polyprotein"/>
    <property type="match status" value="1"/>
</dbReference>
<dbReference type="FunFam" id="2.20.25.220:FF:000001">
    <property type="entry name" value="Genome polyprotein"/>
    <property type="match status" value="1"/>
</dbReference>
<dbReference type="FunFam" id="2.40.10.10:FF:000029">
    <property type="entry name" value="Genome polyprotein"/>
    <property type="match status" value="1"/>
</dbReference>
<dbReference type="FunFam" id="2.40.10.120:FF:000003">
    <property type="entry name" value="Genome polyprotein"/>
    <property type="match status" value="1"/>
</dbReference>
<dbReference type="FunFam" id="3.30.160.890:FF:000001">
    <property type="entry name" value="Genome polyprotein"/>
    <property type="match status" value="1"/>
</dbReference>
<dbReference type="FunFam" id="3.30.70.270:FF:000015">
    <property type="entry name" value="Genome polyprotein"/>
    <property type="match status" value="1"/>
</dbReference>
<dbReference type="FunFam" id="3.40.50.300:FF:000557">
    <property type="entry name" value="Genome polyprotein"/>
    <property type="match status" value="1"/>
</dbReference>
<dbReference type="FunFam" id="3.40.50.300:FF:000717">
    <property type="entry name" value="Genome polyprotein"/>
    <property type="match status" value="1"/>
</dbReference>
<dbReference type="Gene3D" id="2.40.10.120">
    <property type="match status" value="1"/>
</dbReference>
<dbReference type="Gene3D" id="3.30.70.270">
    <property type="match status" value="2"/>
</dbReference>
<dbReference type="Gene3D" id="6.10.250.1610">
    <property type="match status" value="1"/>
</dbReference>
<dbReference type="Gene3D" id="6.10.250.1750">
    <property type="match status" value="1"/>
</dbReference>
<dbReference type="Gene3D" id="6.10.250.2920">
    <property type="match status" value="1"/>
</dbReference>
<dbReference type="Gene3D" id="2.20.25.210">
    <property type="entry name" value="Hepatitis C NS5A, domain 1B"/>
    <property type="match status" value="1"/>
</dbReference>
<dbReference type="Gene3D" id="4.10.710.10">
    <property type="entry name" value="Hepatitis C Virus Capsid Protein, Chain A"/>
    <property type="match status" value="1"/>
</dbReference>
<dbReference type="Gene3D" id="3.30.160.890">
    <property type="entry name" value="Hepatitis C virus envelope glycoprotein E1, chain C"/>
    <property type="match status" value="1"/>
</dbReference>
<dbReference type="Gene3D" id="2.30.30.710">
    <property type="entry name" value="Hepatitis C virus non-structural protein NS2, C-terminal domain"/>
    <property type="match status" value="1"/>
</dbReference>
<dbReference type="Gene3D" id="1.20.1280.150">
    <property type="entry name" value="Hepatitis C virus non-structural protein NS2, N-terminal domain"/>
    <property type="match status" value="1"/>
</dbReference>
<dbReference type="Gene3D" id="2.20.25.220">
    <property type="entry name" value="Hepatitis C virus NS5A, 1B domain"/>
    <property type="match status" value="1"/>
</dbReference>
<dbReference type="Gene3D" id="3.40.50.300">
    <property type="entry name" value="P-loop containing nucleotide triphosphate hydrolases"/>
    <property type="match status" value="2"/>
</dbReference>
<dbReference type="Gene3D" id="1.10.820.10">
    <property type="entry name" value="RNA Helicase Chain A , domain 3"/>
    <property type="match status" value="1"/>
</dbReference>
<dbReference type="Gene3D" id="2.40.10.10">
    <property type="entry name" value="Trypsin-like serine proteases"/>
    <property type="match status" value="1"/>
</dbReference>
<dbReference type="InterPro" id="IPR043502">
    <property type="entry name" value="DNA/RNA_pol_sf"/>
</dbReference>
<dbReference type="InterPro" id="IPR011492">
    <property type="entry name" value="Flavi_DEAD"/>
</dbReference>
<dbReference type="InterPro" id="IPR002521">
    <property type="entry name" value="HCV_Core_C"/>
</dbReference>
<dbReference type="InterPro" id="IPR044896">
    <property type="entry name" value="HCV_core_chain_A"/>
</dbReference>
<dbReference type="InterPro" id="IPR002522">
    <property type="entry name" value="HCV_core_N"/>
</dbReference>
<dbReference type="InterPro" id="IPR002519">
    <property type="entry name" value="HCV_Env"/>
</dbReference>
<dbReference type="InterPro" id="IPR002531">
    <property type="entry name" value="HCV_NS1"/>
</dbReference>
<dbReference type="InterPro" id="IPR002518">
    <property type="entry name" value="HCV_NS2"/>
</dbReference>
<dbReference type="InterPro" id="IPR042205">
    <property type="entry name" value="HCV_NS2_C"/>
</dbReference>
<dbReference type="InterPro" id="IPR042209">
    <property type="entry name" value="HCV_NS2_N"/>
</dbReference>
<dbReference type="InterPro" id="IPR000745">
    <property type="entry name" value="HCV_NS4a"/>
</dbReference>
<dbReference type="InterPro" id="IPR001490">
    <property type="entry name" value="HCV_NS4b"/>
</dbReference>
<dbReference type="InterPro" id="IPR002868">
    <property type="entry name" value="HCV_NS5a"/>
</dbReference>
<dbReference type="InterPro" id="IPR013192">
    <property type="entry name" value="HCV_NS5A_1a"/>
</dbReference>
<dbReference type="InterPro" id="IPR013193">
    <property type="entry name" value="HCV_NS5a_1B_dom"/>
</dbReference>
<dbReference type="InterPro" id="IPR038568">
    <property type="entry name" value="HCV_NS5A_1B_sf"/>
</dbReference>
<dbReference type="InterPro" id="IPR024350">
    <property type="entry name" value="HCV_NS5a_C"/>
</dbReference>
<dbReference type="InterPro" id="IPR049913">
    <property type="entry name" value="HCV_p7"/>
</dbReference>
<dbReference type="InterPro" id="IPR014001">
    <property type="entry name" value="Helicase_ATP-bd"/>
</dbReference>
<dbReference type="InterPro" id="IPR001650">
    <property type="entry name" value="Helicase_C-like"/>
</dbReference>
<dbReference type="InterPro" id="IPR004109">
    <property type="entry name" value="HepC_NS3_protease"/>
</dbReference>
<dbReference type="InterPro" id="IPR054175">
    <property type="entry name" value="NS3_helicase_C"/>
</dbReference>
<dbReference type="InterPro" id="IPR038170">
    <property type="entry name" value="NS5A_1a_sf"/>
</dbReference>
<dbReference type="InterPro" id="IPR027417">
    <property type="entry name" value="P-loop_NTPase"/>
</dbReference>
<dbReference type="InterPro" id="IPR009003">
    <property type="entry name" value="Peptidase_S1_PA"/>
</dbReference>
<dbReference type="InterPro" id="IPR043504">
    <property type="entry name" value="Peptidase_S1_PA_chymotrypsin"/>
</dbReference>
<dbReference type="InterPro" id="IPR043128">
    <property type="entry name" value="Rev_trsase/Diguanyl_cyclase"/>
</dbReference>
<dbReference type="InterPro" id="IPR007094">
    <property type="entry name" value="RNA-dir_pol_PSvirus"/>
</dbReference>
<dbReference type="InterPro" id="IPR002166">
    <property type="entry name" value="RNA_pol_HCV"/>
</dbReference>
<dbReference type="Pfam" id="PF07652">
    <property type="entry name" value="Flavi_DEAD"/>
    <property type="match status" value="1"/>
</dbReference>
<dbReference type="Pfam" id="PF01543">
    <property type="entry name" value="HCV_capsid"/>
    <property type="match status" value="1"/>
</dbReference>
<dbReference type="Pfam" id="PF01542">
    <property type="entry name" value="HCV_core"/>
    <property type="match status" value="1"/>
</dbReference>
<dbReference type="Pfam" id="PF01539">
    <property type="entry name" value="HCV_env"/>
    <property type="match status" value="1"/>
</dbReference>
<dbReference type="Pfam" id="PF01560">
    <property type="entry name" value="HCV_NS1"/>
    <property type="match status" value="1"/>
</dbReference>
<dbReference type="Pfam" id="PF01538">
    <property type="entry name" value="HCV_NS2"/>
    <property type="match status" value="1"/>
</dbReference>
<dbReference type="Pfam" id="PF01006">
    <property type="entry name" value="HCV_NS4a"/>
    <property type="match status" value="1"/>
</dbReference>
<dbReference type="Pfam" id="PF01001">
    <property type="entry name" value="HCV_NS4b"/>
    <property type="match status" value="1"/>
</dbReference>
<dbReference type="Pfam" id="PF01506">
    <property type="entry name" value="HCV_NS5a"/>
    <property type="match status" value="1"/>
</dbReference>
<dbReference type="Pfam" id="PF08300">
    <property type="entry name" value="HCV_NS5a_1a"/>
    <property type="match status" value="1"/>
</dbReference>
<dbReference type="Pfam" id="PF08301">
    <property type="entry name" value="HCV_NS5a_1b"/>
    <property type="match status" value="1"/>
</dbReference>
<dbReference type="Pfam" id="PF12941">
    <property type="entry name" value="HCV_NS5a_C"/>
    <property type="match status" value="1"/>
</dbReference>
<dbReference type="Pfam" id="PF22027">
    <property type="entry name" value="NS3_helicase_C"/>
    <property type="match status" value="1"/>
</dbReference>
<dbReference type="Pfam" id="PF02907">
    <property type="entry name" value="Peptidase_S29"/>
    <property type="match status" value="1"/>
</dbReference>
<dbReference type="Pfam" id="PF00998">
    <property type="entry name" value="RdRP_3"/>
    <property type="match status" value="1"/>
</dbReference>
<dbReference type="SMART" id="SM00487">
    <property type="entry name" value="DEXDc"/>
    <property type="match status" value="1"/>
</dbReference>
<dbReference type="SUPFAM" id="SSF56672">
    <property type="entry name" value="DNA/RNA polymerases"/>
    <property type="match status" value="1"/>
</dbReference>
<dbReference type="SUPFAM" id="SSF52540">
    <property type="entry name" value="P-loop containing nucleoside triphosphate hydrolases"/>
    <property type="match status" value="2"/>
</dbReference>
<dbReference type="SUPFAM" id="SSF50494">
    <property type="entry name" value="Trypsin-like serine proteases"/>
    <property type="match status" value="1"/>
</dbReference>
<dbReference type="PROSITE" id="PS51693">
    <property type="entry name" value="HCV_NS2_PRO"/>
    <property type="match status" value="1"/>
</dbReference>
<dbReference type="PROSITE" id="PS51192">
    <property type="entry name" value="HELICASE_ATP_BIND_1"/>
    <property type="match status" value="1"/>
</dbReference>
<dbReference type="PROSITE" id="PS51194">
    <property type="entry name" value="HELICASE_CTER"/>
    <property type="match status" value="1"/>
</dbReference>
<dbReference type="PROSITE" id="PS51822">
    <property type="entry name" value="HV_PV_NS3_PRO"/>
    <property type="match status" value="1"/>
</dbReference>
<dbReference type="PROSITE" id="PS50507">
    <property type="entry name" value="RDRP_SSRNA_POS"/>
    <property type="match status" value="1"/>
</dbReference>
<organism>
    <name type="scientific">Hepatitis C virus genotype 1b (isolate Taiwan)</name>
    <name type="common">HCV</name>
    <dbReference type="NCBI Taxonomy" id="31645"/>
    <lineage>
        <taxon>Viruses</taxon>
        <taxon>Riboviria</taxon>
        <taxon>Orthornavirae</taxon>
        <taxon>Kitrinoviricota</taxon>
        <taxon>Flasuviricetes</taxon>
        <taxon>Amarillovirales</taxon>
        <taxon>Flaviviridae</taxon>
        <taxon>Hepacivirus</taxon>
        <taxon>Hepacivirus hominis</taxon>
    </lineage>
</organism>
<accession>P29846</accession>
<accession>A7YCU9</accession>
<feature type="initiator methionine" description="Removed; by host" evidence="5">
    <location>
        <position position="1"/>
    </location>
</feature>
<feature type="chain" id="PRO_0000450928" description="Genome polyprotein">
    <location>
        <begin position="2"/>
        <end position="3010"/>
    </location>
</feature>
<feature type="chain" id="PRO_0000037666" description="Core protein precursor">
    <location>
        <begin position="2"/>
        <end position="191"/>
    </location>
</feature>
<feature type="chain" id="PRO_0000037667" description="Mature core protein">
    <location>
        <begin position="2"/>
        <end position="177"/>
    </location>
</feature>
<feature type="propeptide" id="PRO_0000037668" description="ER anchor for the core protein, removed in mature form by host signal peptidase">
    <location>
        <begin position="178"/>
        <end position="191"/>
    </location>
</feature>
<feature type="chain" id="PRO_0000037669" description="Envelope glycoprotein E1">
    <location>
        <begin position="192"/>
        <end position="383"/>
    </location>
</feature>
<feature type="chain" id="PRO_0000037670" description="Envelope glycoprotein E2">
    <location>
        <begin position="384"/>
        <end position="746"/>
    </location>
</feature>
<feature type="chain" id="PRO_0000037671" description="Viroporin p7">
    <location>
        <begin position="747"/>
        <end position="809"/>
    </location>
</feature>
<feature type="chain" id="PRO_0000037672" description="Protease NS2" evidence="16">
    <location>
        <begin position="810"/>
        <end position="1026"/>
    </location>
</feature>
<feature type="chain" id="PRO_0000037673" description="Serine protease/helicase NS3">
    <location>
        <begin position="1027"/>
        <end position="1657"/>
    </location>
</feature>
<feature type="chain" id="PRO_0000037674" description="Non-structural protein 4A">
    <location>
        <begin position="1658"/>
        <end position="1711"/>
    </location>
</feature>
<feature type="chain" id="PRO_0000037675" description="Non-structural protein 4B">
    <location>
        <begin position="1712"/>
        <end position="1972"/>
    </location>
</feature>
<feature type="chain" id="PRO_0000037676" description="Non-structural protein 5A">
    <location>
        <begin position="1973"/>
        <end position="2419"/>
    </location>
</feature>
<feature type="chain" id="PRO_0000037677" description="RNA-directed RNA polymerase">
    <location>
        <begin position="2420"/>
        <end position="3010"/>
    </location>
</feature>
<feature type="topological domain" description="Cytoplasmic" evidence="13">
    <location>
        <begin position="2"/>
        <end position="168"/>
    </location>
</feature>
<feature type="transmembrane region" description="Helical" evidence="13">
    <location>
        <begin position="169"/>
        <end position="189"/>
    </location>
</feature>
<feature type="topological domain" description="Lumenal" evidence="6">
    <location>
        <begin position="190"/>
        <end position="358"/>
    </location>
</feature>
<feature type="transmembrane region" description="Helical" evidence="6">
    <location>
        <begin position="359"/>
        <end position="379"/>
    </location>
</feature>
<feature type="topological domain" description="Lumenal" evidence="6">
    <location>
        <begin position="380"/>
        <end position="725"/>
    </location>
</feature>
<feature type="transmembrane region" description="Helical" evidence="6">
    <location>
        <begin position="726"/>
        <end position="746"/>
    </location>
</feature>
<feature type="topological domain" description="Lumenal" evidence="6">
    <location>
        <begin position="747"/>
        <end position="757"/>
    </location>
</feature>
<feature type="transmembrane region" description="Helical" evidence="6">
    <location>
        <begin position="758"/>
        <end position="778"/>
    </location>
</feature>
<feature type="topological domain" description="Cytoplasmic" evidence="6">
    <location>
        <begin position="779"/>
        <end position="781"/>
    </location>
</feature>
<feature type="transmembrane region" description="Helical" evidence="6">
    <location>
        <begin position="782"/>
        <end position="803"/>
    </location>
</feature>
<feature type="topological domain" description="Lumenal" evidence="6">
    <location>
        <begin position="804"/>
        <end position="813"/>
    </location>
</feature>
<feature type="transmembrane region" description="Helical" evidence="12">
    <location>
        <begin position="814"/>
        <end position="834"/>
    </location>
</feature>
<feature type="topological domain" description="Cytoplasmic" evidence="12">
    <location>
        <begin position="835"/>
        <end position="838"/>
    </location>
</feature>
<feature type="transmembrane region" description="Helical" evidence="12">
    <location>
        <begin position="839"/>
        <end position="859"/>
    </location>
</feature>
<feature type="topological domain" description="Lumenal" evidence="12">
    <location>
        <begin position="860"/>
        <end position="881"/>
    </location>
</feature>
<feature type="transmembrane region" description="Helical" evidence="12">
    <location>
        <begin position="882"/>
        <end position="902"/>
    </location>
</feature>
<feature type="topological domain" description="Cytoplasmic" evidence="12">
    <location>
        <begin position="903"/>
        <end position="1657"/>
    </location>
</feature>
<feature type="transmembrane region" description="Helical" evidence="13">
    <location>
        <begin position="1658"/>
        <end position="1678"/>
    </location>
</feature>
<feature type="topological domain" description="Cytoplasmic" evidence="13">
    <location>
        <begin position="1679"/>
        <end position="1805"/>
    </location>
</feature>
<feature type="transmembrane region" description="Helical" evidence="13">
    <location>
        <begin position="1806"/>
        <end position="1824"/>
    </location>
</feature>
<feature type="topological domain" description="Lumenal" evidence="6">
    <location>
        <begin position="1825"/>
        <end position="1828"/>
    </location>
</feature>
<feature type="transmembrane region" description="Helical" evidence="13">
    <location>
        <begin position="1829"/>
        <end position="1849"/>
    </location>
</feature>
<feature type="topological domain" description="Cytoplasmic" evidence="13">
    <location>
        <position position="1850"/>
    </location>
</feature>
<feature type="transmembrane region" description="Helical" evidence="13">
    <location>
        <begin position="1851"/>
        <end position="1871"/>
    </location>
</feature>
<feature type="topological domain" description="Lumenal" evidence="13">
    <location>
        <begin position="1872"/>
        <end position="1881"/>
    </location>
</feature>
<feature type="transmembrane region" description="Helical" evidence="13">
    <location>
        <begin position="1882"/>
        <end position="1902"/>
    </location>
</feature>
<feature type="topological domain" description="Cytoplasmic" evidence="13">
    <location>
        <begin position="1903"/>
        <end position="1972"/>
    </location>
</feature>
<feature type="intramembrane region" evidence="6">
    <location>
        <begin position="1973"/>
        <end position="2002"/>
    </location>
</feature>
<feature type="topological domain" description="Cytoplasmic" evidence="6">
    <location>
        <begin position="2003"/>
        <end position="2989"/>
    </location>
</feature>
<feature type="transmembrane region" description="Helical" evidence="6">
    <location>
        <begin position="2990"/>
        <end position="3010"/>
    </location>
</feature>
<feature type="domain" description="Peptidase C18" evidence="16">
    <location>
        <begin position="903"/>
        <end position="1026"/>
    </location>
</feature>
<feature type="domain" description="Peptidase S29" evidence="17">
    <location>
        <begin position="1027"/>
        <end position="1208"/>
    </location>
</feature>
<feature type="domain" description="Helicase ATP-binding" evidence="15">
    <location>
        <begin position="1217"/>
        <end position="1369"/>
    </location>
</feature>
<feature type="domain" description="RdRp catalytic" evidence="14">
    <location>
        <begin position="2633"/>
        <end position="2751"/>
    </location>
</feature>
<feature type="region of interest" description="Disordered" evidence="6">
    <location>
        <begin position="2"/>
        <end position="75"/>
    </location>
</feature>
<feature type="region of interest" description="Interaction with DDX3X" evidence="9">
    <location>
        <begin position="2"/>
        <end position="59"/>
    </location>
</feature>
<feature type="region of interest" description="Interaction with EIF2AK2/PKR" evidence="3">
    <location>
        <begin position="2"/>
        <end position="58"/>
    </location>
</feature>
<feature type="region of interest" description="Interaction with STAT1" evidence="3">
    <location>
        <begin position="2"/>
        <end position="23"/>
    </location>
</feature>
<feature type="region of interest" description="Important for endoplasmic reticulum and mitochondrial localization" evidence="3">
    <location>
        <begin position="112"/>
        <end position="152"/>
    </location>
</feature>
<feature type="region of interest" description="Interaction with APOA2" evidence="19">
    <location>
        <begin position="122"/>
        <end position="173"/>
    </location>
</feature>
<feature type="region of interest" description="Important for lipid droplets localization" evidence="6">
    <location>
        <begin position="164"/>
        <end position="167"/>
    </location>
</feature>
<feature type="region of interest" description="Important for fusion" evidence="6">
    <location>
        <begin position="265"/>
        <end position="296"/>
    </location>
</feature>
<feature type="region of interest" description="HVR1" evidence="6">
    <location>
        <begin position="385"/>
        <end position="411"/>
    </location>
</feature>
<feature type="region of interest" description="HVR2" evidence="6">
    <location>
        <begin position="474"/>
        <end position="479"/>
    </location>
</feature>
<feature type="region of interest" description="CD81-binding 1" evidence="4">
    <location>
        <begin position="480"/>
        <end position="493"/>
    </location>
</feature>
<feature type="region of interest" description="CD81-binding 2" evidence="4">
    <location>
        <begin position="544"/>
        <end position="551"/>
    </location>
</feature>
<feature type="region of interest" description="PKR/eIF2-alpha phosphorylation homology domain (PePHD)" evidence="1">
    <location>
        <begin position="660"/>
        <end position="671"/>
    </location>
</feature>
<feature type="region of interest" description="Protease NS2-3" evidence="4">
    <location>
        <begin position="904"/>
        <end position="1206"/>
    </location>
</feature>
<feature type="region of interest" description="Interaction with host SCPS1" evidence="11">
    <location>
        <begin position="929"/>
        <end position="949"/>
    </location>
</feature>
<feature type="region of interest" description="RNA-binding" evidence="4">
    <location>
        <begin position="1486"/>
        <end position="1497"/>
    </location>
</feature>
<feature type="region of interest" description="NS3-binding" evidence="6">
    <location>
        <begin position="1679"/>
        <end position="1690"/>
    </location>
</feature>
<feature type="region of interest" description="Transcriptional activation" evidence="13">
    <location>
        <begin position="2120"/>
        <end position="2332"/>
    </location>
</feature>
<feature type="region of interest" description="FKBP8-binding" evidence="3">
    <location>
        <begin position="2120"/>
        <end position="2208"/>
    </location>
</feature>
<feature type="region of interest" description="Interaction with non-structural protein 4A" evidence="3">
    <location>
        <begin position="2135"/>
        <end position="2139"/>
    </location>
</feature>
<feature type="region of interest" description="Interaction with host SKP2" evidence="6">
    <location>
        <begin position="2189"/>
        <end position="2441"/>
    </location>
</feature>
<feature type="region of interest" description="Interaction with EIF2AK2/PKR" evidence="4">
    <location>
        <begin position="2210"/>
        <end position="2275"/>
    </location>
</feature>
<feature type="region of interest" description="ISDR" evidence="3">
    <location>
        <begin position="2210"/>
        <end position="2249"/>
    </location>
</feature>
<feature type="region of interest" description="NS4B-binding" evidence="13">
    <location>
        <begin position="2249"/>
        <end position="2306"/>
    </location>
</feature>
<feature type="region of interest" description="Disordered" evidence="18">
    <location>
        <begin position="2351"/>
        <end position="2409"/>
    </location>
</feature>
<feature type="region of interest" description="V3" evidence="1">
    <location>
        <begin position="2354"/>
        <end position="2377"/>
    </location>
</feature>
<feature type="short sequence motif" description="Nuclear localization signal" evidence="11">
    <location>
        <begin position="5"/>
        <end position="13"/>
    </location>
</feature>
<feature type="short sequence motif" description="Nuclear localization signal" evidence="11">
    <location>
        <begin position="38"/>
        <end position="43"/>
    </location>
</feature>
<feature type="short sequence motif" description="Nuclear localization signal" evidence="11">
    <location>
        <begin position="58"/>
        <end position="64"/>
    </location>
</feature>
<feature type="short sequence motif" description="Nuclear localization signal" evidence="11">
    <location>
        <begin position="66"/>
        <end position="71"/>
    </location>
</feature>
<feature type="short sequence motif" description="DECH box" evidence="11">
    <location>
        <begin position="1316"/>
        <end position="1319"/>
    </location>
</feature>
<feature type="short sequence motif" description="SH3-binding" evidence="13">
    <location>
        <begin position="2322"/>
        <end position="2325"/>
    </location>
</feature>
<feature type="short sequence motif" description="Nuclear localization signal" evidence="3">
    <location>
        <begin position="2326"/>
        <end position="2334"/>
    </location>
</feature>
<feature type="compositionally biased region" description="Basic residues" evidence="18">
    <location>
        <begin position="7"/>
        <end position="16"/>
    </location>
</feature>
<feature type="compositionally biased region" description="Low complexity" evidence="18">
    <location>
        <begin position="2351"/>
        <end position="2367"/>
    </location>
</feature>
<feature type="active site" description="For protease NS2 activity; shared with dimeric partner" evidence="16">
    <location>
        <position position="952"/>
    </location>
</feature>
<feature type="active site" description="For protease NS2 activity; shared with dimeric partner" evidence="16">
    <location>
        <position position="972"/>
    </location>
</feature>
<feature type="active site" description="For protease NS2 activity; shared with dimeric partner" evidence="16">
    <location>
        <position position="993"/>
    </location>
</feature>
<feature type="active site" description="Charge relay system; for serine protease NS3 activity" evidence="17">
    <location>
        <position position="1083"/>
    </location>
</feature>
<feature type="active site" description="Charge relay system; for serine protease NS3 activity" evidence="17">
    <location>
        <position position="1107"/>
    </location>
</feature>
<feature type="active site" description="Charge relay system; for serine protease NS3 activity" evidence="17">
    <location>
        <position position="1165"/>
    </location>
</feature>
<feature type="binding site" evidence="17">
    <location>
        <position position="1123"/>
    </location>
    <ligand>
        <name>Zn(2+)</name>
        <dbReference type="ChEBI" id="CHEBI:29105"/>
        <label>1</label>
        <note>structural; for NS3 protease activity and NS2/3 auto-cleavage activity</note>
    </ligand>
</feature>
<feature type="binding site" evidence="17">
    <location>
        <position position="1125"/>
    </location>
    <ligand>
        <name>Zn(2+)</name>
        <dbReference type="ChEBI" id="CHEBI:29105"/>
        <label>1</label>
        <note>structural; for NS3 protease activity and NS2/3 auto-cleavage activity</note>
    </ligand>
</feature>
<feature type="binding site" evidence="17">
    <location>
        <position position="1171"/>
    </location>
    <ligand>
        <name>Zn(2+)</name>
        <dbReference type="ChEBI" id="CHEBI:29105"/>
        <label>1</label>
        <note>structural; for NS3 protease activity and NS2/3 auto-cleavage activity</note>
    </ligand>
</feature>
<feature type="binding site" evidence="17">
    <location>
        <position position="1175"/>
    </location>
    <ligand>
        <name>Zn(2+)</name>
        <dbReference type="ChEBI" id="CHEBI:29105"/>
        <label>1</label>
        <note>structural; for NS3 protease activity and NS2/3 auto-cleavage activity</note>
    </ligand>
</feature>
<feature type="binding site" evidence="15">
    <location>
        <begin position="1230"/>
        <end position="1237"/>
    </location>
    <ligand>
        <name>ATP</name>
        <dbReference type="ChEBI" id="CHEBI:30616"/>
    </ligand>
</feature>
<feature type="binding site" evidence="12">
    <location>
        <position position="1237"/>
    </location>
    <ligand>
        <name>Mg(2+)</name>
        <dbReference type="ChEBI" id="CHEBI:18420"/>
        <label>1</label>
        <note>catalytic; for NS3 helicase activity</note>
    </ligand>
</feature>
<feature type="binding site" evidence="12">
    <location>
        <position position="1317"/>
    </location>
    <ligand>
        <name>Mg(2+)</name>
        <dbReference type="ChEBI" id="CHEBI:18420"/>
        <label>1</label>
        <note>catalytic; for NS3 helicase activity</note>
    </ligand>
</feature>
<feature type="binding site" evidence="12">
    <location>
        <position position="2011"/>
    </location>
    <ligand>
        <name>Zn(2+)</name>
        <dbReference type="ChEBI" id="CHEBI:29105"/>
        <label>2</label>
        <note>structural</note>
    </ligand>
</feature>
<feature type="binding site" evidence="12">
    <location>
        <position position="2029"/>
    </location>
    <ligand>
        <name>Zn(2+)</name>
        <dbReference type="ChEBI" id="CHEBI:29105"/>
        <label>2</label>
        <note>structural</note>
    </ligand>
</feature>
<feature type="binding site" evidence="12">
    <location>
        <position position="2031"/>
    </location>
    <ligand>
        <name>Zn(2+)</name>
        <dbReference type="ChEBI" id="CHEBI:29105"/>
        <label>2</label>
        <note>structural</note>
    </ligand>
</feature>
<feature type="binding site" evidence="12">
    <location>
        <position position="2052"/>
    </location>
    <ligand>
        <name>Zn(2+)</name>
        <dbReference type="ChEBI" id="CHEBI:29105"/>
        <label>2</label>
        <note>structural</note>
    </ligand>
</feature>
<feature type="binding site" evidence="4">
    <location>
        <position position="2639"/>
    </location>
    <ligand>
        <name>Mg(2+)</name>
        <dbReference type="ChEBI" id="CHEBI:18420"/>
        <label>2</label>
        <note>catalytic; for RNA-directed RNA polymerase activity</note>
    </ligand>
</feature>
<feature type="binding site" evidence="4">
    <location>
        <position position="2737"/>
    </location>
    <ligand>
        <name>Mg(2+)</name>
        <dbReference type="ChEBI" id="CHEBI:18420"/>
        <label>2</label>
        <note>catalytic; for RNA-directed RNA polymerase activity</note>
    </ligand>
</feature>
<feature type="binding site" evidence="4">
    <location>
        <position position="2738"/>
    </location>
    <ligand>
        <name>Mg(2+)</name>
        <dbReference type="ChEBI" id="CHEBI:18420"/>
        <label>2</label>
        <note>catalytic; for RNA-directed RNA polymerase activity</note>
    </ligand>
</feature>
<feature type="site" description="Cleavage; by host signal peptide peptidase" evidence="3">
    <location>
        <begin position="177"/>
        <end position="178"/>
    </location>
</feature>
<feature type="site" description="Cleavage; by host signal peptidase" evidence="3">
    <location>
        <begin position="191"/>
        <end position="192"/>
    </location>
</feature>
<feature type="site" description="Cleavage; by host signal peptidase" evidence="3">
    <location>
        <begin position="383"/>
        <end position="384"/>
    </location>
</feature>
<feature type="site" description="Cleavage; by host signal peptidase" evidence="1">
    <location>
        <begin position="746"/>
        <end position="747"/>
    </location>
</feature>
<feature type="site" description="Cleavage; by host signal peptidase" evidence="1">
    <location>
        <begin position="809"/>
        <end position="810"/>
    </location>
</feature>
<feature type="site" description="Cleavage; by protease NS2-3" evidence="16">
    <location>
        <begin position="1026"/>
        <end position="1027"/>
    </location>
</feature>
<feature type="site" description="Cleavage; by serine protease/helicase NS3" evidence="6">
    <location>
        <begin position="1657"/>
        <end position="1658"/>
    </location>
</feature>
<feature type="site" description="Cleavage; by serine protease/helicase NS3" evidence="6">
    <location>
        <begin position="1711"/>
        <end position="1712"/>
    </location>
</feature>
<feature type="site" description="Cleavage; by serine protease/helicase NS3" evidence="6">
    <location>
        <begin position="1972"/>
        <end position="1973"/>
    </location>
</feature>
<feature type="site" description="Cleavage; by serine protease/helicase NS3" evidence="6">
    <location>
        <begin position="2419"/>
        <end position="2420"/>
    </location>
</feature>
<feature type="modified residue" description="N-acetylserine; by host" evidence="10">
    <location>
        <position position="2"/>
    </location>
</feature>
<feature type="modified residue" description="Phosphoserine; by host" evidence="7">
    <location>
        <position position="99"/>
    </location>
</feature>
<feature type="modified residue" description="Phosphoserine; by host PKA" evidence="7">
    <location>
        <position position="116"/>
    </location>
</feature>
<feature type="modified residue" description="Phosphoserine; by host; in p56" evidence="12">
    <location>
        <position position="2194"/>
    </location>
</feature>
<feature type="modified residue" description="Phosphoserine; by host; in p58" evidence="12">
    <location>
        <position position="2197"/>
    </location>
</feature>
<feature type="modified residue" description="Phosphoserine; by host; in p58" evidence="12">
    <location>
        <position position="2201"/>
    </location>
</feature>
<feature type="modified residue" description="Phosphoserine; by host; in p58" evidence="12">
    <location>
        <position position="2204"/>
    </location>
</feature>
<feature type="modified residue" description="Phosphoserine; by host; in p58" evidence="11">
    <location>
        <position position="2207"/>
    </location>
</feature>
<feature type="modified residue" description="Phosphoserine; by host; in p58" evidence="11">
    <location>
        <position position="2210"/>
    </location>
</feature>
<feature type="modified residue" description="Phosphoserine; by host" evidence="3">
    <location>
        <position position="2448"/>
    </location>
</feature>
<feature type="modified residue" description="Phosphoserine; by host" evidence="3">
    <location>
        <position position="2461"/>
    </location>
</feature>
<feature type="lipid moiety-binding region" description="S-palmitoyl cysteine; by host" evidence="6">
    <location>
        <position position="922"/>
    </location>
</feature>
<feature type="lipid moiety-binding region" description="S-palmitoyl cysteine; by host" evidence="6">
    <location>
        <position position="1968"/>
    </location>
</feature>
<feature type="lipid moiety-binding region" description="S-palmitoyl cysteine; by host" evidence="6">
    <location>
        <position position="1972"/>
    </location>
</feature>
<feature type="glycosylation site" description="N-linked (GlcNAc...) asparagine; by host" evidence="6">
    <location>
        <position position="196"/>
    </location>
</feature>
<feature type="glycosylation site" description="N-linked (GlcNAc...) asparagine; by host" evidence="6">
    <location>
        <position position="209"/>
    </location>
</feature>
<feature type="glycosylation site" description="N-linked (GlcNAc...) asparagine; by host" evidence="6">
    <location>
        <position position="234"/>
    </location>
</feature>
<feature type="glycosylation site" description="N-linked (GlcNAc...) asparagine; by host" evidence="6">
    <location>
        <position position="250"/>
    </location>
</feature>
<feature type="glycosylation site" description="N-linked (GlcNAc...) asparagine; by host" evidence="13">
    <location>
        <position position="305"/>
    </location>
</feature>
<feature type="glycosylation site" description="N-linked (GlcNAc...) (high mannose) asparagine; by host" evidence="6">
    <location>
        <position position="417"/>
    </location>
</feature>
<feature type="glycosylation site" description="N-linked (GlcNAc...) (high mannose) asparagine; by host" evidence="6">
    <location>
        <position position="423"/>
    </location>
</feature>
<feature type="glycosylation site" description="N-linked (GlcNAc...) (high mannose) asparagine; by host" evidence="6">
    <location>
        <position position="430"/>
    </location>
</feature>
<feature type="glycosylation site" description="N-linked (GlcNAc...) (high mannose) asparagine; by host" evidence="6">
    <location>
        <position position="448"/>
    </location>
</feature>
<feature type="glycosylation site" description="N-linked (GlcNAc...) (high mannose) asparagine; by host" evidence="6">
    <location>
        <position position="532"/>
    </location>
</feature>
<feature type="glycosylation site" description="N-linked (GlcNAc...) asparagine; by host" evidence="13">
    <location>
        <position position="540"/>
    </location>
</feature>
<feature type="glycosylation site" description="N-linked (GlcNAc...) (high mannose) asparagine; by host" evidence="6">
    <location>
        <position position="556"/>
    </location>
</feature>
<feature type="glycosylation site" description="N-linked (GlcNAc...) (high mannose) asparagine; by host" evidence="6">
    <location>
        <position position="576"/>
    </location>
</feature>
<feature type="glycosylation site" description="N-linked (GlcNAc...) (high mannose) asparagine; by host" evidence="6">
    <location>
        <position position="623"/>
    </location>
</feature>
<feature type="glycosylation site" description="N-linked (GlcNAc...) (high mannose) asparagine; by host" evidence="6">
    <location>
        <position position="645"/>
    </location>
</feature>
<feature type="disulfide bond" evidence="6">
    <location>
        <begin position="429"/>
        <end position="552"/>
    </location>
</feature>
<feature type="disulfide bond" evidence="6">
    <location>
        <begin position="452"/>
        <end position="459"/>
    </location>
</feature>
<feature type="disulfide bond" evidence="6">
    <location>
        <begin position="486"/>
        <end position="494"/>
    </location>
</feature>
<feature type="disulfide bond" evidence="6">
    <location>
        <begin position="503"/>
        <end position="508"/>
    </location>
</feature>
<feature type="disulfide bond" evidence="6">
    <location>
        <begin position="564"/>
        <end position="569"/>
    </location>
</feature>
<feature type="disulfide bond" evidence="6">
    <location>
        <begin position="581"/>
        <end position="585"/>
    </location>
</feature>
<feature type="disulfide bond" evidence="6">
    <location>
        <begin position="597"/>
        <end position="620"/>
    </location>
</feature>
<feature type="disulfide bond" evidence="6">
    <location>
        <begin position="607"/>
        <end position="644"/>
    </location>
</feature>
<feature type="disulfide bond" evidence="6">
    <location>
        <begin position="652"/>
        <end position="677"/>
    </location>
</feature>
<feature type="cross-link" description="Glycyl lysine isopeptide (Lys-Gly) (interchain with G-Cter in ubiquitin)" evidence="6">
    <location>
        <position position="2350"/>
    </location>
</feature>
<feature type="sequence conflict" description="In Ref. 2." evidence="29" ref="2">
    <original>S</original>
    <variation>G</variation>
    <location>
        <position position="1492"/>
    </location>
</feature>
<feature type="helix" evidence="30">
    <location>
        <begin position="33"/>
        <end position="35"/>
    </location>
</feature>
<feature type="strand" evidence="31">
    <location>
        <begin position="1225"/>
        <end position="1229"/>
    </location>
</feature>
<feature type="turn" evidence="31">
    <location>
        <begin position="1236"/>
        <end position="1238"/>
    </location>
</feature>
<feature type="helix" evidence="31">
    <location>
        <begin position="1239"/>
        <end position="1246"/>
    </location>
</feature>
<feature type="strand" evidence="31">
    <location>
        <begin position="1251"/>
        <end position="1256"/>
    </location>
</feature>
<feature type="helix" evidence="31">
    <location>
        <begin position="1258"/>
        <end position="1271"/>
    </location>
</feature>
<feature type="strand" evidence="31">
    <location>
        <begin position="1277"/>
        <end position="1279"/>
    </location>
</feature>
<feature type="strand" evidence="31">
    <location>
        <begin position="1290"/>
        <end position="1295"/>
    </location>
</feature>
<feature type="helix" evidence="31">
    <location>
        <begin position="1296"/>
        <end position="1301"/>
    </location>
</feature>
<feature type="strand" evidence="31">
    <location>
        <begin position="1311"/>
        <end position="1315"/>
    </location>
</feature>
<feature type="turn" evidence="31">
    <location>
        <begin position="1316"/>
        <end position="1319"/>
    </location>
</feature>
<feature type="helix" evidence="31">
    <location>
        <begin position="1323"/>
        <end position="1335"/>
    </location>
</feature>
<feature type="turn" evidence="31">
    <location>
        <begin position="1336"/>
        <end position="1340"/>
    </location>
</feature>
<feature type="strand" evidence="31">
    <location>
        <begin position="1342"/>
        <end position="1350"/>
    </location>
</feature>
<feature type="strand" evidence="31">
    <location>
        <begin position="1362"/>
        <end position="1366"/>
    </location>
</feature>
<feature type="strand" evidence="31">
    <location>
        <begin position="1371"/>
        <end position="1375"/>
    </location>
</feature>
<feature type="strand" evidence="31">
    <location>
        <begin position="1378"/>
        <end position="1380"/>
    </location>
</feature>
<feature type="helix" evidence="31">
    <location>
        <begin position="1382"/>
        <end position="1384"/>
    </location>
</feature>
<feature type="strand" evidence="31">
    <location>
        <begin position="1386"/>
        <end position="1393"/>
    </location>
</feature>
<feature type="helix" evidence="31">
    <location>
        <begin position="1397"/>
        <end position="1408"/>
    </location>
</feature>
<feature type="turn" evidence="31">
    <location>
        <begin position="1409"/>
        <end position="1411"/>
    </location>
</feature>
<feature type="strand" evidence="31">
    <location>
        <begin position="1414"/>
        <end position="1417"/>
    </location>
</feature>
<feature type="helix" evidence="31">
    <location>
        <begin position="1423"/>
        <end position="1425"/>
    </location>
</feature>
<feature type="strand" evidence="31">
    <location>
        <begin position="1428"/>
        <end position="1436"/>
    </location>
</feature>
<feature type="strand" evidence="31">
    <location>
        <begin position="1442"/>
        <end position="1444"/>
    </location>
</feature>
<feature type="strand" evidence="31">
    <location>
        <begin position="1448"/>
        <end position="1453"/>
    </location>
</feature>
<feature type="strand" evidence="31">
    <location>
        <begin position="1456"/>
        <end position="1463"/>
    </location>
</feature>
<feature type="strand" evidence="31">
    <location>
        <begin position="1467"/>
        <end position="1469"/>
    </location>
</feature>
<feature type="strand" evidence="31">
    <location>
        <begin position="1471"/>
        <end position="1478"/>
    </location>
</feature>
<feature type="helix" evidence="31">
    <location>
        <begin position="1481"/>
        <end position="1488"/>
    </location>
</feature>
<feature type="strand" evidence="31">
    <location>
        <begin position="1493"/>
        <end position="1495"/>
    </location>
</feature>
<feature type="strand" evidence="31">
    <location>
        <begin position="1497"/>
        <end position="1502"/>
    </location>
</feature>
<feature type="helix" evidence="31">
    <location>
        <begin position="1514"/>
        <end position="1526"/>
    </location>
</feature>
<feature type="helix" evidence="31">
    <location>
        <begin position="1532"/>
        <end position="1543"/>
    </location>
</feature>
<feature type="helix" evidence="31">
    <location>
        <begin position="1555"/>
        <end position="1563"/>
    </location>
</feature>
<feature type="helix" evidence="31">
    <location>
        <begin position="1570"/>
        <end position="1579"/>
    </location>
</feature>
<feature type="helix" evidence="31">
    <location>
        <begin position="1584"/>
        <end position="1596"/>
    </location>
</feature>
<feature type="helix" evidence="31">
    <location>
        <begin position="1606"/>
        <end position="1617"/>
    </location>
</feature>
<feature type="strand" evidence="31">
    <location>
        <begin position="1627"/>
        <end position="1629"/>
    </location>
</feature>
<feature type="helix" evidence="31">
    <location>
        <begin position="1640"/>
        <end position="1650"/>
    </location>
</feature>
<feature type="turn" evidence="31">
    <location>
        <begin position="1653"/>
        <end position="1655"/>
    </location>
</feature>
<keyword id="KW-0002">3D-structure</keyword>
<keyword id="KW-0007">Acetylation</keyword>
<keyword id="KW-1072">Activation of host autophagy by virus</keyword>
<keyword id="KW-0053">Apoptosis</keyword>
<keyword id="KW-0067">ATP-binding</keyword>
<keyword id="KW-0167">Capsid protein</keyword>
<keyword id="KW-1165">Clathrin-mediated endocytosis of virus by host</keyword>
<keyword id="KW-1015">Disulfide bond</keyword>
<keyword id="KW-1170">Fusion of virus membrane with host endosomal membrane</keyword>
<keyword id="KW-1168">Fusion of virus membrane with host membrane</keyword>
<keyword id="KW-1078">G1/S host cell cycle checkpoint dysregulation by virus</keyword>
<keyword id="KW-0325">Glycoprotein</keyword>
<keyword id="KW-0347">Helicase</keyword>
<keyword id="KW-1032">Host cell membrane</keyword>
<keyword id="KW-1035">Host cytoplasm</keyword>
<keyword id="KW-1038">Host endoplasmic reticulum</keyword>
<keyword id="KW-1041">Host lipid droplet</keyword>
<keyword id="KW-1043">Host membrane</keyword>
<keyword id="KW-1045">Host mitochondrion</keyword>
<keyword id="KW-1048">Host nucleus</keyword>
<keyword id="KW-0945">Host-virus interaction</keyword>
<keyword id="KW-0378">Hydrolase</keyword>
<keyword id="KW-1090">Inhibition of host innate immune response by virus</keyword>
<keyword id="KW-1114">Inhibition of host interferon signaling pathway by virus</keyword>
<keyword id="KW-1097">Inhibition of host MAVS by virus</keyword>
<keyword id="KW-1113">Inhibition of host RLR pathway by virus</keyword>
<keyword id="KW-1105">Inhibition of host STAT1 by virus</keyword>
<keyword id="KW-1110">Inhibition of host TRAFs by virus</keyword>
<keyword id="KW-0922">Interferon antiviral system evasion</keyword>
<keyword id="KW-0407">Ion channel</keyword>
<keyword id="KW-0406">Ion transport</keyword>
<keyword id="KW-1017">Isopeptide bond</keyword>
<keyword id="KW-0449">Lipoprotein</keyword>
<keyword id="KW-0460">Magnesium</keyword>
<keyword id="KW-0472">Membrane</keyword>
<keyword id="KW-0479">Metal-binding</keyword>
<keyword id="KW-1121">Modulation of host cell cycle by virus</keyword>
<keyword id="KW-0511">Multifunctional enzyme</keyword>
<keyword id="KW-0547">Nucleotide-binding</keyword>
<keyword id="KW-0548">Nucleotidyltransferase</keyword>
<keyword id="KW-0553">Oncogene</keyword>
<keyword id="KW-0564">Palmitate</keyword>
<keyword id="KW-0597">Phosphoprotein</keyword>
<keyword id="KW-0645">Protease</keyword>
<keyword id="KW-0687">Ribonucleoprotein</keyword>
<keyword id="KW-0694">RNA-binding</keyword>
<keyword id="KW-0696">RNA-directed RNA polymerase</keyword>
<keyword id="KW-0720">Serine protease</keyword>
<keyword id="KW-0729">SH3-binding</keyword>
<keyword id="KW-0788">Thiol protease</keyword>
<keyword id="KW-0804">Transcription</keyword>
<keyword id="KW-0805">Transcription regulation</keyword>
<keyword id="KW-0808">Transferase</keyword>
<keyword id="KW-0812">Transmembrane</keyword>
<keyword id="KW-1133">Transmembrane helix</keyword>
<keyword id="KW-0813">Transport</keyword>
<keyword id="KW-0832">Ubl conjugation</keyword>
<keyword id="KW-1161">Viral attachment to host cell</keyword>
<keyword id="KW-0261">Viral envelope protein</keyword>
<keyword id="KW-0899">Viral immunoevasion</keyword>
<keyword id="KW-1182">Viral ion channel</keyword>
<keyword id="KW-0543">Viral nucleoprotein</keyword>
<keyword id="KW-1162">Viral penetration into host cytoplasm</keyword>
<keyword id="KW-0693">Viral RNA replication</keyword>
<keyword id="KW-0946">Virion</keyword>
<keyword id="KW-1164">Virus endocytosis by host</keyword>
<keyword id="KW-1160">Virus entry into host cell</keyword>
<keyword id="KW-0862">Zinc</keyword>
<proteinExistence type="evidence at protein level"/>
<protein>
    <recommendedName>
        <fullName>Genome polyprotein</fullName>
    </recommendedName>
    <component>
        <recommendedName>
            <fullName>Core protein precursor</fullName>
        </recommendedName>
        <alternativeName>
            <fullName>Capsid protein C</fullName>
        </alternativeName>
        <alternativeName>
            <fullName>p23</fullName>
        </alternativeName>
    </component>
    <component>
        <recommendedName>
            <fullName>Mature core protein</fullName>
        </recommendedName>
        <alternativeName>
            <fullName>p21</fullName>
        </alternativeName>
    </component>
    <component>
        <recommendedName>
            <fullName>Envelope glycoprotein E1</fullName>
        </recommendedName>
        <alternativeName>
            <fullName>gp32</fullName>
        </alternativeName>
        <alternativeName>
            <fullName>gp35</fullName>
        </alternativeName>
    </component>
    <component>
        <recommendedName>
            <fullName>Envelope glycoprotein E2</fullName>
        </recommendedName>
        <alternativeName>
            <fullName>NS1</fullName>
        </alternativeName>
        <alternativeName>
            <fullName>gp68</fullName>
        </alternativeName>
        <alternativeName>
            <fullName>gp70</fullName>
        </alternativeName>
    </component>
    <component>
        <recommendedName>
            <fullName>Viroporin p7</fullName>
        </recommendedName>
    </component>
    <component>
        <recommendedName>
            <fullName>Protease NS2</fullName>
            <shortName>p23</shortName>
            <ecNumber evidence="4">3.4.22.-</ecNumber>
        </recommendedName>
        <alternativeName>
            <fullName>Non-structural protein 2</fullName>
            <shortName>NS2</shortName>
        </alternativeName>
    </component>
    <component>
        <recommendedName>
            <fullName>Serine protease/helicase NS3</fullName>
            <ecNumber evidence="6">3.4.21.98</ecNumber>
            <ecNumber evidence="6">3.6.1.15</ecNumber>
            <ecNumber evidence="6">3.6.4.13</ecNumber>
        </recommendedName>
        <alternativeName>
            <fullName>Hepacivirin</fullName>
        </alternativeName>
        <alternativeName>
            <fullName evidence="6">NS3 helicase</fullName>
        </alternativeName>
        <alternativeName>
            <fullName evidence="6">NS3 protease</fullName>
        </alternativeName>
        <alternativeName>
            <fullName>NS3P</fullName>
        </alternativeName>
        <alternativeName>
            <fullName>Viroporin p70</fullName>
        </alternativeName>
    </component>
    <component>
        <recommendedName>
            <fullName>Non-structural protein 4A</fullName>
            <shortName>NS4A</shortName>
        </recommendedName>
        <alternativeName>
            <fullName>p8</fullName>
        </alternativeName>
    </component>
    <component>
        <recommendedName>
            <fullName>Non-structural protein 4B</fullName>
            <shortName>NS4B</shortName>
        </recommendedName>
        <alternativeName>
            <fullName>p27</fullName>
        </alternativeName>
    </component>
    <component>
        <recommendedName>
            <fullName>Non-structural protein 5A</fullName>
            <shortName>NS5A</shortName>
        </recommendedName>
        <alternativeName>
            <fullName>p56/58</fullName>
        </alternativeName>
    </component>
    <component>
        <recommendedName>
            <fullName>RNA-directed RNA polymerase</fullName>
            <ecNumber evidence="6">2.7.7.48</ecNumber>
        </recommendedName>
        <alternativeName>
            <fullName>NS5B</fullName>
        </alternativeName>
        <alternativeName>
            <fullName>p68</fullName>
        </alternativeName>
    </component>
</protein>
<sequence length="3010" mass="327051">MSTNGKPQRKTKRNTNRRPQDVKFPGGGQIVGGVYLLPRRGPRLGVRATRKTWERSQPRGRRQPIPKARQPEGRAWAQPGYPWPLYGNEGLGWAGWLVSPRGSRPNWGPTDPRRRSRNLGKVIDTLTCGFADLMGYIPLVGAPLGGVARALAHGVRVLEDGVNYATGNLPGCSFSIFLLALLSCLTIPASAYEVHNVSGIYHVTNDCSNSSIVYEAADMIMHTPGCVPCVRENNSSRCWVALTPTLAARNNSVPTATIRRHVDLLVGAAAFCSAMYVGDLCGSVFLVSQLFTFSPRRYETVQDCNCSIYPGHVTGHRMAWDMMMNWSPTTALVVSQLLRIPQAVVDMVGGAHWGVLAGLAYYSMVGNWAKVLIVMLLFAGVDGSTIVSGGTVARTTHSLASLFTQGASQKIQLINTNGSWHINRTALNCNDSLQTGFLASLFYAHRFNASGCPERMASCRSIDKFDQGWGPITYTEADIQDQRPYCWHYAPRPCGIVPASQVCGPVYCFTPSPVVVGTTDRFGAPTYSWGENETDVLILNNTRPPQGNWFGCTWMNSTGFTKTCGGPPCNIGGGGNNTLVCPTDCFRKHPEATYTKCGSGPWLTPRCMVDYPYRLWHYPCTVNFTIFKVRMYVGGVEHRLNAACNWTRGERCDLEDRDRSELSPLLLSTTEWQILPCSFTGLPALSTGLIHLHQNVVDVQYLYGIGSAVVSFAIKWEYILLLFLLLADARVCACLWMMLLIAQAEAALENLVVFNAASVAGMHGTLSFLVFFCAAWYIKGRLVPGAAYALYGVWPLLLLLLALPPRAYAMDREMAASCGGAVFVGLVLLTLSPHYKMFLARLIWWLQYFITRAEAHLQVWIPPLNVRGGRDAIILLTCAAYPELIFDITKILLAILGPLMVLQAGLTRIPYFVRAQGLIRACMLVRKAAGGHYVQMALMKLAALTGTYVYDHLTPLQDWAHTGLRDLAVAVEPVVFSDMETKIITWGADTAACGDIILGLPVSARRGREILLGPADSLEGRGWRLLAPITAYAQQTRGLFGCIITSLTGRDKNQVEGEVQVVSTATQSFLATCINGVCWTVYHGAGSKTLAGPKGPITQMYTNVDQDLVGWHAPQGARSLTPCTCGSSDLYLVTRHADVIPVRRRGDSRGSLLSPRPISYLKGSSGGPLLCPSGHVVGIFRAAVCTRGVAKAVDFVPVESMETTMRSPVFTDNSSPPAVPQAFQVAHLHAPTGSGKSTKVPAAYAAQGYKVLVLNPSVAATLGFGAYMSKAHGVDPNIRTGVRTITTGAPITYSTYGKFLADGGCSGGAYDIIMCDECHSTDSTTILGIGTVLDQAETAGARLVVLATATPPGSVTVPHPNIEEIALSNTGEIPFYGKAIPIETIKGGRHLIFCHSKKKCDELAAKLSALGIHAVAYYRGLDVSVIPASGNVVVVATDALMTGFTGDFDSVIDCNTCVTQTVDFSLDPTFTIETTTMPQDAVSRSQRRGRTSRGRRGIYRFVTPGERPSGMFDSSVLCECYDAGCAWYELTPAETSVRLRAYLNTPGLPVCQDHLEFWESVFTGLTHIDAHFLSQTKQAGDNFPYLVAYQATVCARAQAPPPSWDQMWKCLTRLKPTLHGPTPLLYRLGAVQNEVTLTHPITKYIMACMSADLEVVTSTWVLVGGVLAALAAYCLTTGSVVIVGRIILSGKPAVVPDREVLYQEFDEMEECASHLPYIEQGMQLAEQFKQKALGLLQTATKQAEAAAPVVESKWRTLEAFWANDMWNFISGIQYLAGLSTLPGNPAIASLMAFTASITSPLTTQSTLLFNILGGWVAAQLAPPGAASAFVGAGIAGAAVGSIGLGKVLVDMVAGYGAGVAGALVAFKVMSGEMPSTEDLVNLLPAILSPGALVVGVVCAAILRRHVDPGEGAVQWMNRLIAFASRGNHVSPTHYVPESDAAARVTQILSGLTITQLLRRLHQWINEDCSTPCSGSWLRDVWDWICTVLADFKTWLQSKLLPRLPGVPFFSCQRGYKGVWRGDGIMQTTCPCGAQLTGHVKNGSMRIWGPKTCSNTWHGTFPINAYTTGPCTPSPAPNYSRALWRVAAEEYVEVRRVGDFHYVTGMTTDNVKCPCQVPAPEFFTEVDGVRLHRYAPACKPLLREEVSFQVGLNQYVVGSQLPCEPEPDVAVLTSMLTDPSHITAETAKRRLARGSPPSLASSSASQLSALSLKAACTTRHTPPDADLIEANLLWRQEMGGNITRVESENKVVILDSFDPLRAEEDEREVSVPAEILRKSRKFPPALPVWARPDYNPPLLEPWKDPDYVPPVVHGCPLPPVKAPPIPPPRRKRTVVLTESTVSSALAELATKTFGSSESSAAGSGTATAPPDQPSDDGDAGSDVESCSSMPPLEGEPGDPDLSDGSWSTVSEEDGEGVICCSMSYTWTGALITPCAAEESKLPINALSNSLLRHHNMVYATTSRSASQRQKKVTIDRLQVLDDHYRDVLKEMKAKASTVKAKLLSVEEACKLTPPHSARSKFGYGAKDVRNLSGKAINHIRSVWKDLLEDTETPIDTTIMAKNEVFCVQPEKGGRKPARLIVFPDLGVRVCEKMALYDVVSTLPQAVMGSSYGFQYSPGQRVEFLVNAWKSKKCPMGFSYDTRCFDSTVTESDIRVEESIYQCCDLAPEARQAIRSLTERLYIGGPLTNSKGQNCGYRRCRASGVLTTSCGNTLTCYLKASAACRAAKLQDCTMLVCGDDLVVICESAGTQEDAASLRVFTEAMTRYSAPPGDLPQPEYDQELITSCSSNVSVAHDASGKRVYYLTRDPTTPLARAAWATARHTPVNSWLGNIIMYAPTLWARMILMTHFFSILLAQEQLEKALDCQIYGACYSIEPLDLPQIIERLHGLSAFSLHSYSPGEINRVASCLRKLGVPPLRAWRHRARSVRAKLLSQGGRAATCGRYLFNWAVKTKLKLTPIPAASQLDLSKWFVAGYGGGDIYHSLSRARPRWFMLCLLLLSVGVGIYLLPNR</sequence>
<name>POLG_HCVTW</name>
<comment type="function">
    <molecule>Mature core protein</molecule>
    <text evidence="3 5 6 11 23 29">Packages viral RNA to form a viral nucleocapsid, and promotes virion budding (Probable). Participates in the viral particle production as a result of its interaction with the non-structural protein 5A (By similarity). Binds RNA and may function as a RNA chaperone to induce the RNA structural rearrangements taking place during virus replication (By similarity). Modulates viral translation initiation by interacting with viral IRES and 40S ribosomal subunit (By similarity). Affects various cell signaling pathways, host immunity and lipid metabolism (Probable). Prevents the establishment of cellular antiviral state by blocking the interferon-alpha/beta (IFN-alpha/beta) and IFN-gamma signaling pathways and by blocking the formation of phosphorylated STAT1 and promoting ubiquitin-mediated proteasome-dependent degradation of STAT1 (By similarity). Activates STAT3 leading to cellular transformation (PubMed:12208879). Regulates the activity of cellular genes, including c-myc and c-fos (By similarity). May repress the promoter of p53, and sequester CREB3 and SP110 isoform 3/Sp110b in the cytoplasm (By similarity). Represses cell cycle negative regulating factor CDKN1A, thereby interrupting an important check point of normal cell cycle regulation (By similarity). Targets transcription factors involved in the regulation of inflammatory responses and in the immune response: suppresses TNF-induced NF-kappa-B activation, and activates AP-1 (By similarity). Binds to dendritic cells (DCs) via C1QR1, resulting in down-regulation of T-lymphocytes proliferation (By similarity). Alters lipid metabolism by interacting with hepatocellular proteins involved in lipid accumulation and storage (By similarity). Induces up-regulation of FAS promoter activity, and thereby contributes to the increased triglyceride accumulation in hepatocytes (steatosis) (By similarity).</text>
</comment>
<comment type="function">
    <molecule>Envelope glycoprotein E1</molecule>
    <text evidence="6">Forms a heterodimer with envelope glycoprotein E2, which mediates virus attachment to the host cell, virion internalization through clathrin-dependent endocytosis and fusion with host membrane (By similarity). Fusion with the host cell is most likely mediated by both E1 and E2, through conformational rearrangements of the heterodimer required for fusion rather than a classical class II fusion mechanism (By similarity). E1/E2 heterodimer binds host apolipoproteins such as APOB and ApoE thereby forming a lipo-viro-particle (LVP) (By similarity). APOE associated to the LVP allows the initial virus attachment to cell surface receptors such as the heparan sulfate proteoglycans (HSPGs), syndecan-1 (SDC1), syndecan-1 (SDC2), the low-density lipoprotein receptor (LDLR) and scavenger receptor class B type I (SCARB1) (By similarity). The cholesterol transfer activity of SCARB1 allows E2 exposure and binding of E2 to SCARB1 and the tetraspanin CD81 (By similarity). E1/E2 heterodimer binding on CD81 activates the epithelial growth factor receptor (EGFR) signaling pathway (By similarity). Diffusion of the complex E1-E2-EGFR-SCARB1-CD81 to the cell lateral membrane allows further interaction with Claudin 1 (CLDN1) and occludin (OCLN) to finally trigger HCV entry (By similarity).</text>
</comment>
<comment type="function">
    <molecule>Envelope glycoprotein E2</molecule>
    <text evidence="5 6">Forms a heterodimer with envelope glycoprotein E1, which mediates virus attachment to the host cell, virion internalization through clathrin-dependent endocytosis and fusion with host membrane (By similarity). Fusion with the host cell is most likely mediated by both E1 and E2, through conformational rearrangements of the heterodimer required for fusion rather than a classical class II fusion mechanism (By similarity). The interaction between envelope glycoprotein E2 and host apolipoprotein E/APOE allows the proper assembly, maturation and infectivity of the viral particles (By similarity). This interaction is probably promoted via the up-regulation of cellular autophagy by the virus (By similarity). E1/E2 heterodimer binds host apolipoproteins such as APOB and APOE thereby forming a lipo-viro-particle (LVP) (By similarity). APOE associated to the LVP allows the initial virus attachment to cell surface receptors such as the heparan sulfate proteoglycans (HSPGs), syndecan-1 (SDC1), syndecan-1 (SDC2), the low-density lipoprotein receptor (LDLR) and scavenger receptor class B type I (SCARB1) (By similarity). The cholesterol transfer activity of SCARB1 allows E2 exposure and binding of E2 to SCARB1 and the tetraspanin CD81 (By similarity). E1/E2 heterodimer binding on CD81 activates the epithelial growth factor receptor (EGFR) signaling pathway (By similarity). Diffusion of the complex E1-E2-EGFR-SCARB1-CD81 to the cell lateral membrane allows further interaction with Claudin 1 (CLDN1) and occludin (OCLN) to finally trigger HCV entry (By similarity). Inhibits host EIF2AK2/PKR activation, preventing the establishment of an antiviral state (By similarity). Viral ligand for CD209/DC-SIGN and CLEC4M/DC-SIGNR, which are respectively found on dendritic cells (DCs), and on liver sinusoidal endothelial cells and macrophage-like cells of lymph node sinuses (By similarity). These interactions allow the capture of circulating HCV particles by these cells and subsequent facilitated transmission to permissive cells such as hepatocytes and lymphocyte subpopulations (By similarity). The interaction between E2 and host amino acid transporter complex formed by SLC3A2 and SLC7A5/LAT1 may facilitate viral entry into host cell (By similarity).</text>
</comment>
<comment type="function">
    <molecule>Viroporin p7</molecule>
    <text evidence="6 11 29">Ion channel protein that acts as a viroporin and plays an essential role in the assembly, envelopment and secretion of viral particles (By similarity). Regulates the host cell secretory pathway, which induces the intracellular retention of viral glycoproteins and favors assembly of viral particles (By similarity). Creates a pore in acidic organelles and releases Ca(2+) and H(+) in the cytoplasm of infected cells, leading to a productive viral infection (By similarity). High levels of cytoplasmic Ca(2+) may trigger membrane trafficking and transport of viral ER-associated proteins to viroplasms, sites of viral genome replication (Probable). This ionic imbalance induces the assembly of the inflammasome complex, which triggers the maturation of pro-IL-1beta into IL-1beta through the action of caspase-1 (By similarity). Targets also host mitochondria and induces mitochondrial depolarization (By similarity). In addition of its role as a viroporin, acts as a lipid raft adhesion factor (By similarity).</text>
</comment>
<comment type="function">
    <molecule>Protease NS2</molecule>
    <text evidence="4 6">Cysteine protease required for the proteolytic auto-cleavage between the non-structural proteins NS2 and NS3 (By similarity). The N-terminus of NS3 is required for the function of NS2 protease (active region NS2-3) (By similarity). Promotes the initiation of viral particle assembly by mediating the interaction between structural and non-structural proteins (By similarity).</text>
</comment>
<comment type="function">
    <molecule>Serine protease/helicase NS3</molecule>
    <text evidence="6 12">Displays three enzymatic activities: serine protease with a chymotrypsin-like fold, NTPase and RNA helicase (By similarity). NS3 serine protease, in association with NS4A, is responsible for the cleavages of NS3-NS4A, NS4A-NS4B, NS4B-NS5A and NS5A-NS5B (By similarity). The NS3/NS4A complex prevents phosphorylation of host IRF3, thus preventing the establishment of dsRNA induced antiviral state (By similarity). The NS3/NS4A complex induces host amino acid transporter component SLC3A2, thus contributing to HCV propagation (By similarity). NS3 RNA helicase binds to RNA and unwinds both dsDNA and dsRNA in the 3' to 5' direction, and likely resolves RNA complicated stable secondary structures in the template strand (By similarity). Binds a single ATP and catalyzes the unzipping of a single base pair of dsRNA (By similarity). Inhibits host antiviral proteins TBK1 and IRF3 thereby preventing the establishment of an antiviral state (By similarity). Cleaves host MAVS/CARDIF thereby preventing the establishment of an antiviral state (By similarity). Cleaves host TICAM1/TRIF, thereby disrupting TLR3 signaling and preventing the establishment of an antiviral state (By similarity).</text>
</comment>
<comment type="function">
    <molecule>Non-structural protein 4A</molecule>
    <text evidence="6 12">Peptide cofactor which forms a non-covalent complex with the N-terminal of NS3 serine protease (By similarity). The NS3/NS4A complex prevents phosphorylation of host IRF3, thus preventing the establishment of dsRNA induced antiviral state (By similarity). The NS3/NS4A complex induces host amino acid transporter component SLC3A2, thus contributing to HCV propagation (By similarity).</text>
</comment>
<comment type="function">
    <molecule>Non-structural protein 4B</molecule>
    <text evidence="6">Induces a specific membrane alteration that serves as a scaffold for the virus replication complex (By similarity). This membrane alteration gives rise to the so-called ER-derived membranous web that contains the replication complex (By similarity). NS4B self-interaction contributes to its function in membranous web formation (By similarity). Promotes host TRIF protein degradation in a CASP8-dependent manner thereby inhibiting host TLR3-mediated interferon signaling (By similarity). Disrupts the interaction between STING and TBK1 contributing to the inhibition of interferon signaling (By similarity).</text>
</comment>
<comment type="function">
    <molecule>Non-structural protein 5A</molecule>
    <text evidence="3 5 6 11 12 27">Phosphorylated protein that is indispensable for viral replication and assembly (By similarity). Both hypo- and hyperphosphorylated states are required for the viral life cycle (By similarity). The hyperphosphorylated form of NS5A is an inhibitor of viral replication (By similarity). Involved in RNA-binding and especially in binding to the viral genome (By similarity). Zinc is essential for RNA-binding (By similarity). Participates in the viral particle production as a result of its interaction with the mature viral core protein (By similarity). Its interaction with host VAPB may target the viral replication complex to vesicles (By similarity). Down-regulates viral IRES translation initiation (By similarity). Mediates interferon resistance, presumably by interacting with and inhibiting host EIF2AK2/PKR (By similarity). Prevents BIN1-induced apoptosis (By similarity). Acts as a transcriptional activator of some host genes important for viral replication when localized in the nucleus (By similarity). Via the interaction with host PACSIN2, modulates lipid droplet formation in order to promote virion assembly (By similarity). Modulates TNFRSF21/DR6 signaling pathway for viral propagation (PubMed:9557650).</text>
</comment>
<comment type="function">
    <molecule>RNA-directed RNA polymerase</molecule>
    <text evidence="6">RNA-dependent RNA polymerase that performs primer-template recognition and RNA synthesis during viral replication. Initiates RNA transcription/replication at a flavin adenine dinucleotide (FAD), resulting in a 5'- FAD cap on viral RNAs. In this way, recognition of viral 5' RNA by host pattern recognition receptors can be bypassed, thereby evading activation of antiviral pathways.</text>
</comment>
<comment type="catalytic activity">
    <molecule>Serine protease/helicase NS3</molecule>
    <reaction evidence="6">
        <text>Hydrolysis of four peptide bonds in the viral precursor polyprotein, commonly with Asp or Glu in the P6 position, Cys or Thr in P1 and Ser or Ala in P1'.</text>
        <dbReference type="EC" id="3.4.21.98"/>
    </reaction>
</comment>
<comment type="catalytic activity">
    <molecule>Serine protease/helicase NS3</molecule>
    <reaction evidence="6">
        <text>a ribonucleoside 5'-triphosphate + H2O = a ribonucleoside 5'-diphosphate + phosphate + H(+)</text>
        <dbReference type="Rhea" id="RHEA:23680"/>
        <dbReference type="ChEBI" id="CHEBI:15377"/>
        <dbReference type="ChEBI" id="CHEBI:15378"/>
        <dbReference type="ChEBI" id="CHEBI:43474"/>
        <dbReference type="ChEBI" id="CHEBI:57930"/>
        <dbReference type="ChEBI" id="CHEBI:61557"/>
        <dbReference type="EC" id="3.6.1.15"/>
    </reaction>
</comment>
<comment type="catalytic activity">
    <molecule>Serine protease/helicase NS3</molecule>
    <reaction evidence="6">
        <text>ATP + H2O = ADP + phosphate + H(+)</text>
        <dbReference type="Rhea" id="RHEA:13065"/>
        <dbReference type="ChEBI" id="CHEBI:15377"/>
        <dbReference type="ChEBI" id="CHEBI:15378"/>
        <dbReference type="ChEBI" id="CHEBI:30616"/>
        <dbReference type="ChEBI" id="CHEBI:43474"/>
        <dbReference type="ChEBI" id="CHEBI:456216"/>
        <dbReference type="EC" id="3.6.4.13"/>
    </reaction>
</comment>
<comment type="catalytic activity">
    <molecule>RNA-directed RNA polymerase</molecule>
    <reaction evidence="14">
        <text>RNA(n) + a ribonucleoside 5'-triphosphate = RNA(n+1) + diphosphate</text>
        <dbReference type="Rhea" id="RHEA:21248"/>
        <dbReference type="Rhea" id="RHEA-COMP:14527"/>
        <dbReference type="Rhea" id="RHEA-COMP:17342"/>
        <dbReference type="ChEBI" id="CHEBI:33019"/>
        <dbReference type="ChEBI" id="CHEBI:61557"/>
        <dbReference type="ChEBI" id="CHEBI:140395"/>
        <dbReference type="EC" id="2.7.7.48"/>
    </reaction>
</comment>
<comment type="cofactor">
    <molecule>Protease NS2</molecule>
    <cofactor evidence="4">
        <name>Zn(2+)</name>
        <dbReference type="ChEBI" id="CHEBI:29105"/>
    </cofactor>
    <text evidence="4">Activity of protease NS2 is dependent on zinc ions and completely inhibited by EDTA. This is probably due to the fact that NS2 protease activity needs NS3 N-terminus that binds a zinc atom (active region NS2-3).</text>
</comment>
<comment type="cofactor">
    <molecule>Serine protease/helicase NS3</molecule>
    <cofactor evidence="4">
        <name>Zn(2+)</name>
        <dbReference type="ChEBI" id="CHEBI:29105"/>
    </cofactor>
    <cofactor evidence="12">
        <name>Mg(2+)</name>
        <dbReference type="ChEBI" id="CHEBI:18420"/>
    </cofactor>
    <text evidence="4 12">Binds 1 zinc ion, which has a structural role (By similarity). The magnesium ion is essential for the helicase activity (By similarity).</text>
</comment>
<comment type="cofactor">
    <molecule>RNA-directed RNA polymerase</molecule>
    <cofactor evidence="4">
        <name>Mg(2+)</name>
        <dbReference type="ChEBI" id="CHEBI:18420"/>
    </cofactor>
    <text evidence="4">Binds 2 magnesium ion that constitute a dinuclear catalytic metal center.</text>
</comment>
<comment type="activity regulation">
    <molecule>Viroporin p7</molecule>
    <text evidence="3 6">Inhibited by the antiviral drug hexamethylene amiloride (By similarity). Inhibition by amantadine appears to be genotype-dependent (By similarity). Also inhibited by long-alkyl-chain iminosugar derivatives (By similarity).</text>
</comment>
<comment type="activity regulation">
    <molecule>RNA-directed RNA polymerase</molecule>
    <text evidence="6">Activity is up-regulated by PRK2/PKN2-mediated phosphorylation.</text>
</comment>
<comment type="subunit">
    <molecule>Mature core protein</molecule>
    <text evidence="3 5 6 8 9 11 19 20 21 22 23 25 26 28">Homooligomer (PubMed:8615040). Interacts with E1 (via C-terminus) (By similarity). Interacts with the non-structural protein 5A (By similarity). Interacts (via N-terminus) with host STAT1 (via SH2 domain); this interaction results in decreased STAT1 phosphorylation and ubiquitin-mediated proteasome-dependent STAT1 degradation, leading to decreased IFN-stimulated gene transcription (By similarity). Interacts with host STAT3; this interaction constitutively activates STAT3 (PubMed:12208879). Interacts with host LTBR receptor (PubMed:8995654). Interacts with host TNFRSF1A receptor and possibly induces apoptosis (By similarity). Interacts with host HNRPK (PubMed:9651361). Interacts with host YWHAE (PubMed:10644344). Interacts with host UBE3A/E6AP (By similarity). Interacts with host DDX3X (By similarity). Interacts with host APOA2 (PubMed:10498661). Interacts with host RXRA protein (PubMed:11915042). Interacts with host SP110 isoform 3/Sp110b; this interaction sequesters the transcriptional corepressor SP110 away from the nucleus (By similarity). Interacts with host CREB3 nuclear transcription protein; this interaction triggers cell transformation (PubMed:10675342). Interacts with host ACY3 (By similarity). Interacts with host C1QR1 (By similarity). Interacts with host RBM24; this interaction, which enhances the interaction of the mature core protein with 5'-UTR, may inhibit viral translation and favor replication (By similarity). Interacts with host EIF2AK2/PKR; this interaction induces the autophosphorylation of EIF2AK2 (By similarity). Part of the viral assembly initiation complex composed of NS2, E1, E2, NS3, NS4A, NS5A and the mature core protein (By similarity).</text>
</comment>
<comment type="subunit">
    <molecule>Envelope glycoprotein E1</molecule>
    <text evidence="6 11">Forms a heterodimer with envelope glycoprotein E2 (By similarity). Interacts with mature core protein (By similarity). Interacts with protease NS2 (By similarity). The heterodimer E1/E2 interacts with host CLDN1; this interaction plays a role in viral entry into host cell (By similarity). Interacts with host SPSB2 (via C-terminus) (By similarity). Part of the viral assembly initiation complex composed of NS2, E1, E2, NS3, NS4A, NS5A and the mature core protein (By similarity). Interacts with host NEURL3; this interaction prevents E1 binding to glycoprotein E2 (By similarity).</text>
</comment>
<comment type="subunit">
    <molecule>Envelope glycoprotein E2</molecule>
    <text evidence="6 11 12">Forms a heterodimer with envelope glycoprotein E1 (By similarity). Interacts with host CD81 and SCARB1 receptors; these interactions play a role in viral entry into host cell (By similarity). Interacts with host EIF2AK2/PKR; this interaction inhibits EIF2AK2 and probably allows the virus to evade the innate immune response (By similarity). Interacts with host CD209/DC-SIGN and CLEC4M/DC-SIGNR (By similarity). Interact with host SPCS1; this interaction is essential for viral particle assembly (By similarity). Interacts with protease NS2 (By similarity). The heterodimer E1/E2 interacts with host CLDN1; this interaction plays a role in viral entry into host cell (By similarity). Part of the viral assembly initiation complex composed of NS2, E1, E2, NS3, NS4A, NS5A and the mature core protein (By similarity). Interacts with host SLC3A2/4F2hc; the interaction may facilitate viral entry into host cell (By similarity). Interacts with human PLSCR1 (By similarity).</text>
</comment>
<comment type="subunit">
    <molecule>Viroporin p7</molecule>
    <text evidence="2 6 11">Homohexamer (By similarity). Homoheptamer (By similarity). Interacts with protease NS2 (By similarity).</text>
</comment>
<comment type="subunit">
    <molecule>Protease NS2</molecule>
    <text evidence="6 11">Homodimer (By similarity). Interacts with host SPCS1; this interaction is essential for viral particle assembly (By similarity). Interacts with envelope glycoprotein E1 (By similarity). Interacts with envelope glycoprotein E2 (By similarity). Interacts with viroporin p7 (By similarity). Interacts with serine protease/helicase NS3 (By similarity). Part of the replication complex composed of NS2, NS3, NS4A, NS4B, NS5A and the RNA-directed RNA polymerase embedded in an ER-derived membranous web (By similarity). Part of the viral assembly initiation complex composed of NS2, E1, E2, NS3, NS4A, NS5A and the mature core protein (By similarity).</text>
</comment>
<comment type="subunit">
    <molecule>Serine protease/helicase NS3</molecule>
    <text evidence="4 6 11 12">Interacts with protease NS2 (By similarity). Interacts with non-structural protein 4A; this interaction stabilizes the folding of NS3 serine protease (By similarity). NS3-NS4A interaction is essential for NS3 activation and allows membrane anchorage of the latter (By similarity). NS3/NS4A complex also prevents phosphorylation of host IRF3, thus preventing the establishment of dsRNA induced antiviral state (By similarity). Interacts with host MAVS; this interaction leads to the cleavage and inhibition of host MAVS (By similarity). Interacts with host TICAM1; this interaction leads to the cleavage and inhibition of host TICAM1 (By similarity). Interacts with host TANK-binding kinase/TBK1; this interaction results in the inhibition of the association between TBK1 and IRF3, which leads to the inhibition of IRF3 activation (By similarity). Interacts with host RBM24 (By similarity). Part of the replication complex composed of NS2, NS3, NS4A, NS4B, NS5A and the RNA-directed RNA polymerase embedded in an ER-derived membranous web (By similarity). Part of the viral assembly initiation complex composed of NS2, E1, E2, NS3, NS4A, NS5A and the mature core protein (By similarity).</text>
</comment>
<comment type="subunit">
    <molecule>Non-structural protein 4A</molecule>
    <text evidence="3 4 6 11">Interacts with NS3 serine protease; this interaction stabilizes the folding of NS3 serine protease (By similarity). NS3-NS4A interaction is essential for NS3 activation and allows membrane anchorage of the latter (By similarity). Interacts with non-structural protein 5A (via N-terminus) (By similarity). Part of the replication complex composed of NS2, NS3, NS4A, NS4B, NS5A and the RNA-directed RNA polymerase embedded in an ER-derived membranous web (By similarity). Part of the viral assembly initiation complex composed of NS2, E1, E2, NS3, NS4A, NS5A and the mature core protein (By similarity).</text>
</comment>
<comment type="subunit">
    <molecule>Non-structural protein 4B</molecule>
    <text evidence="6 11">Homomultimer (By similarity). Interacts with non-structural protein NS5A (By similarity). Interacts with host PLA2G4C; this interaction likely initiates the recruitment of replication complexes to lipid droplets (By similarity). Interacts with host STING; this interaction disrupts the interaction between STING and TBK1 thereby suppressing the interferon signaling (By similarity). Part of the replication complex composed of NS2, NS3, NS4A, NS4B, NS5A and the RNA-directed RNA polymerase embedded in an ER-derived membranous web (By similarity).</text>
</comment>
<comment type="subunit">
    <molecule>Non-structural protein 5A</molecule>
    <text evidence="3 4 5 6 11">Monomer. Homodimer; dimerization is required for RNA-binding (By similarity). Interacts with the mature core protein (By similarity). Interacts (via N-terminus) with non-structural protein 4A (By similarity). Interacts with non-structural protein 4B. Interacts (via region D2) with RNA-directed RNA polymerase (By similarity). Part of the viral assembly initiation complex composed of NS2, E1, E2, NS3, NS4A, NS5A and the mature core protein (By similarity). Part of the replication complex composed of NS2, NS3, NS4A, NS4B, NS5A and the RNA-directed RNA polymerase embedded in an ER-derived membranous web (By similarity). Interacts with host GRB2 (By similarity). Interacts with host BIN1 (By similarity). Interacts with host PIK3R1 (By similarity). Interacts with host SRCAP (By similarity). Interacts with host FKBP8 (By similarity). Interacts (via C-terminus) with host VAPB (via MSP domain). Interacts with host EIF2AK2/PKR; this interaction leads to disruption of EIF2AK2 dimerization by NS5A and probably allows the virus to evade the innate immune response. Interacts (via N-terminus) with host PACSIN2 (via N-terminus); this interaction attenuates protein kinase C alpha-mediated phosphorylation of PACSIN2 by disrupting the interaction between PACSIN2 and PRKCA (By similarity). Interacts (via N-terminus) with host SRC kinase (via SH2 domain) (By similarity). Interacts with most Src-family kinases (By similarity). Interacts with host IFI27 and SKP2; promotes the ubiquitin-mediated proteasomal degradation of NS5A (By similarity). Interacts with host GPS2 (By similarity). Interacts with host TNFRSF21; this interaction allows the modulation by the virus of JNK, p38 MAPK, STAT3, and Akt signaling pathways in a DR6-dependent manner. Interacts (via N-terminus) with host CIDEB (via N-terminus); this interaction seems to regulate the association of HCV particles with APOE (By similarity). Interacts with host CHKA/Choline Kinase-alpha; CHKA bridges host PI4KA and NS5A and potentiates NS5A-stimulated PI4KA activity, which then facilitates the targeting of the ternary complex to the ER for viral replication (By similarity). Interacts with host SPSB2 (via C-terminus); this interaction targets NS5A for ubiquitination and degradation (By similarity). Interacts with host RAB18; this interaction may promote the association of NS5A and other replicase components with lipid droplets (By similarity). Interacts (via region D2) with host PPIA/CYPA; the interaction stimulates RNA-binding ability of NS5A and is dependent on the peptidyl-prolyl cis-trans isomerase activity of PPIA/CYPA. Interacts with host TRIM14; this interaction induces the degradation of NS5A (By similarity).</text>
</comment>
<comment type="subunit">
    <molecule>RNA-directed RNA polymerase</molecule>
    <text evidence="6 24">Homooligomer (By similarity). Interacts with non-structural protein 5A (By similarity). Interacts with host VAPB (By similarity). Interacts with host PRK2/PKN2 (By similarity). Interacts with host HNRNPA1 and SEPT6; these interactions facilitate viral replication (PubMed:17229681). Part of the replication complex composed of NS2, NS3, NS4A, NS4B, NS5A and the RNA-directed RNA polymerase (By similarity).</text>
</comment>
<comment type="interaction">
    <interactant intactId="EBI-909718">
        <id>P29846</id>
    </interactant>
    <interactant intactId="EBI-625022">
        <id>O43889-2</id>
        <label>CREB3</label>
    </interactant>
    <organismsDiffer>true</organismsDiffer>
    <experiments>8</experiments>
</comment>
<comment type="interaction">
    <interactant intactId="EBI-8847394">
        <id>PRO_0000037666</id>
    </interactant>
    <interactant intactId="EBI-8847386">
        <id>PRO_0000037669</id>
        <label>-</label>
        <dbReference type="UniProtKB" id="P29846"/>
    </interactant>
    <organismsDiffer>false</organismsDiffer>
    <experiments>2</experiments>
</comment>
<comment type="interaction">
    <interactant intactId="EBI-8847394">
        <id>PRO_0000037666</id>
    </interactant>
    <interactant intactId="EBI-304185">
        <id>P61978</id>
        <label>HNRNPK</label>
    </interactant>
    <organismsDiffer>true</organismsDiffer>
    <experiments>9</experiments>
</comment>
<comment type="interaction">
    <interactant intactId="EBI-8847394">
        <id>PRO_0000037666</id>
    </interactant>
    <interactant intactId="EBI-3509981">
        <id>P36941</id>
        <label>LTBR</label>
    </interactant>
    <organismsDiffer>true</organismsDiffer>
    <experiments>5</experiments>
</comment>
<comment type="interaction">
    <interactant intactId="EBI-9303062">
        <id>PRO_0000037673</id>
    </interactant>
    <interactant intactId="EBI-629985">
        <id>P08107</id>
        <label>HSPA1B</label>
    </interactant>
    <organismsDiffer>true</organismsDiffer>
    <experiments>3</experiments>
</comment>
<comment type="interaction">
    <interactant intactId="EBI-9303022">
        <id>PRO_0000037676</id>
    </interactant>
    <interactant intactId="EBI-9303062">
        <id>PRO_0000037673</id>
        <label>-</label>
        <dbReference type="UniProtKB" id="P29846"/>
    </interactant>
    <organismsDiffer>false</organismsDiffer>
    <experiments>3</experiments>
</comment>
<comment type="interaction">
    <interactant intactId="EBI-9303022">
        <id>PRO_0000037676</id>
    </interactant>
    <interactant intactId="EBI-629985">
        <id>P08107</id>
        <label>HSPA1B</label>
    </interactant>
    <organismsDiffer>true</organismsDiffer>
    <experiments>7</experiments>
</comment>
<comment type="interaction">
    <interactant intactId="EBI-9303040">
        <id>PRO_0000037677</id>
    </interactant>
    <interactant intactId="EBI-629985">
        <id>P08107</id>
        <label>HSPA1B</label>
    </interactant>
    <organismsDiffer>true</organismsDiffer>
    <experiments>3</experiments>
</comment>
<comment type="subcellular location">
    <molecule>Core protein precursor</molecule>
    <subcellularLocation>
        <location evidence="5">Host endoplasmic reticulum membrane</location>
        <topology evidence="13">Single-pass membrane protein</topology>
    </subcellularLocation>
    <subcellularLocation>
        <location evidence="5">Host mitochondrion membrane</location>
        <topology evidence="13">Single-pass type I membrane protein</topology>
    </subcellularLocation>
    <text>The C-terminal transmembrane domain of the core protein precursor contains an ER signal leading the nascent polyprotein to the ER membrane.</text>
</comment>
<comment type="subcellular location">
    <molecule>Mature core protein</molecule>
    <subcellularLocation>
        <location evidence="11">Virion</location>
    </subcellularLocation>
    <subcellularLocation>
        <location evidence="11">Host cytoplasm</location>
    </subcellularLocation>
    <subcellularLocation>
        <location evidence="3">Host nucleus</location>
    </subcellularLocation>
    <subcellularLocation>
        <location evidence="11">Host lipid droplet</location>
    </subcellularLocation>
    <text evidence="6">Only a minor proportion of core protein is present in the nucleus (By similarity). Probably present on the surface of lipid droplets (By similarity).</text>
</comment>
<comment type="subcellular location">
    <molecule>Envelope glycoprotein E1</molecule>
    <subcellularLocation>
        <location evidence="29">Virion membrane</location>
        <topology evidence="29">Single-pass type I membrane protein</topology>
    </subcellularLocation>
    <subcellularLocation>
        <location>Host endoplasmic reticulum membrane</location>
        <topology evidence="6">Single-pass type I membrane protein</topology>
    </subcellularLocation>
    <text evidence="6">The C-terminal transmembrane domain acts as a signal sequence and forms a hairpin structure before cleavage by host signal peptidase (By similarity). After cleavage, the membrane sequence is retained at the C-terminus of the protein, serving as ER membrane anchor (By similarity). A reorientation of the second hydrophobic stretch occurs after cleavage producing a single reoriented transmembrane domain (By similarity). These events explain the final topology of the protein (By similarity).</text>
</comment>
<comment type="subcellular location">
    <molecule>Envelope glycoprotein E2</molecule>
    <subcellularLocation>
        <location evidence="29">Virion membrane</location>
        <topology evidence="29">Single-pass type I membrane protein</topology>
    </subcellularLocation>
    <subcellularLocation>
        <location>Host endoplasmic reticulum membrane</location>
        <topology evidence="6">Single-pass type I membrane protein</topology>
    </subcellularLocation>
    <subcellularLocation>
        <location evidence="12">Host lipid droplet</location>
    </subcellularLocation>
    <text evidence="6">The C-terminal transmembrane domain acts as a signal sequence and forms a hairpin structure before cleavage by host signal peptidase (By similarity). After cleavage, the membrane sequence is retained at the C-terminus of the protein, serving as ER membrane anchor (By similarity). A reorientation of the second hydrophobic stretch occurs after cleavage producing a single reoriented transmembrane domain (By similarity). These events explain the final topology of the protein (By similarity).</text>
</comment>
<comment type="subcellular location">
    <molecule>Viroporin p7</molecule>
    <subcellularLocation>
        <location evidence="6">Host endoplasmic reticulum membrane</location>
        <topology evidence="6">Multi-pass membrane protein</topology>
    </subcellularLocation>
    <subcellularLocation>
        <location evidence="6">Host mitochondrion</location>
    </subcellularLocation>
    <subcellularLocation>
        <location evidence="6">Host cell membrane</location>
    </subcellularLocation>
    <text evidence="6">The C-terminus of p7 membrane domain acts as a signal sequence (By similarity). After cleavage by host signal peptidase, the membrane sequence is retained at the C-terminus of the protein, serving as ER membrane anchor (By similarity). ER retention of p7 is leaky and a small fraction reaches the plasma membrane (By similarity).</text>
</comment>
<comment type="subcellular location">
    <molecule>Protease NS2</molecule>
    <subcellularLocation>
        <location evidence="6">Host endoplasmic reticulum membrane</location>
        <topology evidence="6">Multi-pass membrane protein</topology>
    </subcellularLocation>
    <subcellularLocation>
        <location evidence="12">Host lipid droplet</location>
    </subcellularLocation>
    <text evidence="11">Probably present on the surface of lipid droplets.</text>
</comment>
<comment type="subcellular location">
    <molecule>Serine protease/helicase NS3</molecule>
    <subcellularLocation>
        <location evidence="29">Host endoplasmic reticulum membrane</location>
        <topology evidence="29">Peripheral membrane protein</topology>
    </subcellularLocation>
    <text evidence="29">NS3 is associated to the ER membrane through its binding to NS4A.</text>
</comment>
<comment type="subcellular location">
    <molecule>Non-structural protein 4A</molecule>
    <subcellularLocation>
        <location evidence="29">Host endoplasmic reticulum membrane</location>
        <topology evidence="29">Single-pass type I membrane protein</topology>
    </subcellularLocation>
    <text>Host membrane insertion occurs after processing by the NS3 protease.</text>
</comment>
<comment type="subcellular location">
    <molecule>Non-structural protein 4B</molecule>
    <subcellularLocation>
        <location evidence="6">Host endoplasmic reticulum membrane</location>
        <topology evidence="6">Multi-pass membrane protein</topology>
    </subcellularLocation>
    <text evidence="6">A reorientation of the N-terminus into the ER lumen occurs post-translationally.</text>
</comment>
<comment type="subcellular location">
    <molecule>Non-structural protein 5A</molecule>
    <subcellularLocation>
        <location evidence="6">Host endoplasmic reticulum membrane</location>
        <topology evidence="6">Peripheral membrane protein</topology>
    </subcellularLocation>
    <subcellularLocation>
        <location evidence="6">Host cytoplasm</location>
        <location evidence="6">Host perinuclear region</location>
    </subcellularLocation>
    <subcellularLocation>
        <location evidence="3">Host mitochondrion</location>
    </subcellularLocation>
    <subcellularLocation>
        <location evidence="6">Host cytoplasm</location>
    </subcellularLocation>
    <subcellularLocation>
        <location evidence="3">Host nucleus</location>
    </subcellularLocation>
    <subcellularLocation>
        <location evidence="12">Host lipid droplet</location>
    </subcellularLocation>
    <text evidence="3 6">Host membrane insertion occurs after processing by the NS3 protease (By similarity). Localizes at the surface of lipid droplets (By similarity).</text>
</comment>
<comment type="subcellular location">
    <molecule>RNA-directed RNA polymerase</molecule>
    <subcellularLocation>
        <location evidence="6">Host cytoplasm</location>
    </subcellularLocation>
    <subcellularLocation>
        <location>Host endoplasmic reticulum membrane</location>
        <topology evidence="6">Single-pass type IV membrane protein</topology>
    </subcellularLocation>
    <text evidence="6">Host membrane insertion occurs after processing by the NS3 protease.</text>
</comment>
<comment type="domain">
    <molecule>Envelope glycoprotein E1</molecule>
    <text evidence="6">The transmembrane regions of envelope E1 and E2 glycoproteins are involved in heterodimer formation, ER localization, and assembly of these proteins.</text>
</comment>
<comment type="domain">
    <molecule>Envelope glycoprotein E2</molecule>
    <text evidence="4 6">The transmembrane regions of envelope E1 and E2 glycoproteins are involved in heterodimer formation, ER localization, and assembly of these proteins (By similarity). Envelope E2 glycoprotein contain two highly variable regions called hypervariable region 1 and 2 (HVR1 and HVR2) (By similarity). E2 also contain two segments involved in CD81-binding (By similarity). HVR1 is implicated in the SCARB1-mediated cell entry and probably acts as a regulator of the association of particles with lipids (By similarity).</text>
</comment>
<comment type="domain">
    <molecule>Protease NS2</molecule>
    <text evidence="4">The N-terminus of NS3 is required for the catalytic activity of protease NS2 (By similarity). The minimal catalytic region includes the C-terminus of NS2 and the N-terminus NS3 protease domain (active region NS2-3) (By similarity).</text>
</comment>
<comment type="domain">
    <molecule>Serine protease/helicase NS3</molecule>
    <text evidence="3 6">The N-terminal one-third contains the protease activity (By similarity). This region contains a zinc atom that does not belong to the active site, but may play a structural rather than a catalytic role (By similarity). This region is essential for the activity of protease NS2, maybe by contributing to the folding of the latter (By similarity). The NTPase/helicase activity is located in the twothirds C-terminus of NS3, this domain contains the NTPase and RNA-binding regions (By similarity).</text>
</comment>
<comment type="domain">
    <molecule>Non-structural protein 4B</molecule>
    <text evidence="11">Contains a glycine zipper region that critically contributes to the biogenesis of functional ER-derived replication organelles.</text>
</comment>
<comment type="domain">
    <molecule>Non-structural protein 5A</molecule>
    <text evidence="3 6">The N-terminus of NS5A acts as membrane anchor (By similarity). The central part of NS5A contains a variable region called interferon sensitivity determining region (ISDR) and seems to be intrinsically disordered and interacts with NS5B and host EIF2AK2 (By similarity). The C-terminus of NS5A contains a variable region called variable region 3 (V3) (By similarity). ISDR and V3 may be involved in sensitivity and/or resistance to IFN-alpha therapy (By similarity). The C-terminus contains a nuclear localization signal (By similarity). The SH3-binding domain is involved in the interaction with host BIN1, GRB2 and Src-family kinases (By similarity).</text>
</comment>
<comment type="PTM">
    <molecule>Genome polyprotein</molecule>
    <text evidence="5 6">Specific enzymatic cleavages in vivo yield mature proteins (By similarity). The structural proteins, core, E1, E2 and p7 are produced by proteolytic processing by host signal peptidases (By similarity). The core protein precursor is synthesized as a 23 kDa, which is retained in the ER membrane through the hydrophobic signal peptide (By similarity). Cleavage by the signal peptidase releases the 21 kDa mature core protein (By similarity). The cleavage of the core protein precursor occurs between aminoacids 176 and 188 but the exact cleavage site is not known (By similarity). Some degraded forms of the core protein appear as well during the course of infection (By similarity). The other proteins (p7, NS2, NS3, NS4A, NS4B, NS5A and NS5B) are cleaved by the viral proteases (By similarity). Autoprocessing between NS2 and NS3 is mediated by the NS2 cysteine protease catalytic domain and regulated by the NS3 N-terminal domain (By similarity).</text>
</comment>
<comment type="PTM">
    <molecule>Mature core protein</molecule>
    <text evidence="7">Phosphorylated by host PKC and PKA.</text>
</comment>
<comment type="PTM">
    <molecule>Mature core protein</molecule>
    <text evidence="8">Ubiquitinated; mediated by UBE3A and leading to core protein subsequent proteasomal degradation.</text>
</comment>
<comment type="PTM">
    <molecule>Envelope glycoprotein E1</molecule>
    <text evidence="6">Highly N-glycosylated.</text>
</comment>
<comment type="PTM">
    <molecule>Envelope glycoprotein E2</molecule>
    <text evidence="6">Highly N-glycosylated.</text>
</comment>
<comment type="PTM">
    <molecule>Protease NS2</molecule>
    <text evidence="6">Palmitoylation is required for NS2/3 autoprocessing and E2 recruitment to membranes.</text>
</comment>
<comment type="PTM">
    <molecule>Non-structural protein 4B</molecule>
    <text evidence="6">Palmitoylated. This modification may play a role in its polymerization or in protein-protein interactions.</text>
</comment>
<comment type="PTM">
    <molecule>Non-structural protein 5A</molecule>
    <text evidence="3 5">Phosphorylated on serines in a basal form termed p56 (By similarity). p58 is a hyperphosphorylated form of p56 (By similarity). p56 and p58 coexist in the cell in roughly equivalent amounts (By similarity). Hyperphosphorylation is dependent on the presence of NS4A (By similarity). Host CSNK1A1/CKI-alpha or RPS6KB1 kinases may be responsible for NS5A phosphorylation (By similarity).</text>
</comment>
<comment type="PTM">
    <molecule>Non-structural protein 5A</molecule>
    <text evidence="11">Tyrosine phosphorylation is essential for the interaction with host SRC.</text>
</comment>
<comment type="PTM">
    <molecule>RNA-directed RNA polymerase</molecule>
    <text evidence="3">The N-terminus is phosphorylated by host PRK2/PKN2.</text>
</comment>
<comment type="PTM">
    <molecule>Non-structural protein 5A</molecule>
    <text evidence="6">Ubiquitinated (By similarity). Ubiquitination, most probably at Lys-2350, mediated by host IFI27 and SKP2 leads to proteasomal degradation, restricting viral infection (By similarity). Ubiquitination by host TRIM22 leads to interruption of viral replication (By similarity).</text>
</comment>
<comment type="miscellaneous">
    <text evidence="29">Viral particle assembly takes place at the surface of ER-derived membranes in close proximity to lipid droplets. NS2 associates with E1/E2 glycoproteins, NS3 and NS5A, which interacts with the viral RNA and core protein to promote genome encapsidation. The nucleocapsid buds at the ER membrane where E1/E2 glycoproteins are anchored and afterward associate with nascent lipid droplet to acquire APOE and APOC. Secretion of viral particles is probably regulated by viroporin p7.</text>
</comment>
<comment type="miscellaneous">
    <molecule>Non-structural protein 5A</molecule>
    <text evidence="29">Cell culture adaptation of the virus leads to mutations in NS5A, reducing its inhibitory effect on replication.</text>
</comment>
<comment type="miscellaneous">
    <molecule>Mature core protein</molecule>
    <text evidence="3">Exerts viral interference on hepatitis B virus when HCV and HBV coinfect the same cell, by suppressing HBV gene expression, RNA encapsidation and budding.</text>
</comment>
<comment type="similarity">
    <text evidence="29">Belongs to the hepacivirus polyprotein family.</text>
</comment>
<comment type="caution">
    <text evidence="29">The core gene probably also codes for alternative reading frame proteins (ARFPs). Many functions described for the core protein might belong to the ARFPs.</text>
</comment>
<evidence type="ECO:0000250" key="1"/>
<evidence type="ECO:0000250" key="2">
    <source>
        <dbReference type="UniProtKB" id="O92972"/>
    </source>
</evidence>
<evidence type="ECO:0000250" key="3">
    <source>
        <dbReference type="UniProtKB" id="P26662"/>
    </source>
</evidence>
<evidence type="ECO:0000250" key="4">
    <source>
        <dbReference type="UniProtKB" id="P26663"/>
    </source>
</evidence>
<evidence type="ECO:0000250" key="5">
    <source>
        <dbReference type="UniProtKB" id="P26664"/>
    </source>
</evidence>
<evidence type="ECO:0000250" key="6">
    <source>
        <dbReference type="UniProtKB" id="P27958"/>
    </source>
</evidence>
<evidence type="ECO:0000250" key="7">
    <source>
        <dbReference type="UniProtKB" id="Q01403"/>
    </source>
</evidence>
<evidence type="ECO:0000250" key="8">
    <source>
        <dbReference type="UniProtKB" id="Q03463"/>
    </source>
</evidence>
<evidence type="ECO:0000250" key="9">
    <source>
        <dbReference type="UniProtKB" id="Q5EG65"/>
    </source>
</evidence>
<evidence type="ECO:0000250" key="10">
    <source>
        <dbReference type="UniProtKB" id="Q913V3"/>
    </source>
</evidence>
<evidence type="ECO:0000250" key="11">
    <source>
        <dbReference type="UniProtKB" id="Q99IB8"/>
    </source>
</evidence>
<evidence type="ECO:0000250" key="12">
    <source>
        <dbReference type="UniProtKB" id="Q9WMX2"/>
    </source>
</evidence>
<evidence type="ECO:0000255" key="13"/>
<evidence type="ECO:0000255" key="14">
    <source>
        <dbReference type="PROSITE-ProRule" id="PRU00539"/>
    </source>
</evidence>
<evidence type="ECO:0000255" key="15">
    <source>
        <dbReference type="PROSITE-ProRule" id="PRU00541"/>
    </source>
</evidence>
<evidence type="ECO:0000255" key="16">
    <source>
        <dbReference type="PROSITE-ProRule" id="PRU01030"/>
    </source>
</evidence>
<evidence type="ECO:0000255" key="17">
    <source>
        <dbReference type="PROSITE-ProRule" id="PRU01166"/>
    </source>
</evidence>
<evidence type="ECO:0000256" key="18">
    <source>
        <dbReference type="SAM" id="MobiDB-lite"/>
    </source>
</evidence>
<evidence type="ECO:0000269" key="19">
    <source>
    </source>
</evidence>
<evidence type="ECO:0000269" key="20">
    <source>
    </source>
</evidence>
<evidence type="ECO:0000269" key="21">
    <source>
    </source>
</evidence>
<evidence type="ECO:0000269" key="22">
    <source>
    </source>
</evidence>
<evidence type="ECO:0000269" key="23">
    <source>
    </source>
</evidence>
<evidence type="ECO:0000269" key="24">
    <source>
    </source>
</evidence>
<evidence type="ECO:0000269" key="25">
    <source>
    </source>
</evidence>
<evidence type="ECO:0000269" key="26">
    <source>
    </source>
</evidence>
<evidence type="ECO:0000269" key="27">
    <source>
    </source>
</evidence>
<evidence type="ECO:0000269" key="28">
    <source>
    </source>
</evidence>
<evidence type="ECO:0000305" key="29"/>
<evidence type="ECO:0007829" key="30">
    <source>
        <dbReference type="PDB" id="1N64"/>
    </source>
</evidence>
<evidence type="ECO:0007829" key="31">
    <source>
        <dbReference type="PDB" id="2ZJO"/>
    </source>
</evidence>
<organismHost>
    <name type="scientific">Homo sapiens</name>
    <name type="common">Human</name>
    <dbReference type="NCBI Taxonomy" id="9606"/>
</organismHost>
<reference key="1">
    <citation type="journal article" date="1992" name="Virology">
        <title>The Taiwanese hepatitis C virus genome: sequence determination and mapping the 5' termini of viral genomic and antigenomic RNA.</title>
        <authorList>
            <person name="Chen P.J."/>
            <person name="Lin M.H."/>
            <person name="Tai K.F."/>
            <person name="Liu P.C."/>
            <person name="Lin C.J."/>
            <person name="Chen D.S."/>
        </authorList>
    </citation>
    <scope>NUCLEOTIDE SEQUENCE [GENOMIC RNA]</scope>
</reference>
<reference key="2">
    <citation type="journal article" date="1991" name="Hepatology">
        <title>Isolation of a complementary DNA fragment of hepatitis C virus in Taiwan revealed significant sequence variations compared with other isolates.</title>
        <authorList>
            <person name="Chen P.J."/>
            <person name="Lin M.H."/>
            <person name="Tu S.J."/>
            <person name="Chen D.S."/>
        </authorList>
    </citation>
    <scope>NUCLEOTIDE SEQUENCE [GENOMIC RNA] OF 1461-1644</scope>
    <source>
        <strain>Isolate T3</strain>
    </source>
</reference>
<reference key="3">
    <citation type="journal article" date="1996" name="Virology">
        <title>Homotypic interaction and multimerization of hepatitis C virus core protein.</title>
        <authorList>
            <person name="Matsumoto M."/>
            <person name="Hwang S.B."/>
            <person name="Jeng K.-S."/>
            <person name="Zhu N."/>
            <person name="Lai M.M.C."/>
        </authorList>
    </citation>
    <scope>SUBUNIT (MATURE CORE PROTEIN)</scope>
</reference>
<reference key="4">
    <citation type="journal article" date="1997" name="J. Virol.">
        <title>Hepatitis C virus core protein interacts with the cytoplasmic tail of lymphotoxin-beta receptor.</title>
        <authorList>
            <person name="Matsumoto M."/>
            <person name="Hsieh T.-Y."/>
            <person name="Zhu N."/>
            <person name="VanArsdale T."/>
            <person name="Hwang S.B."/>
            <person name="Jeng K.-S."/>
            <person name="Gorbalenya A.E."/>
            <person name="Lo S.-Y."/>
            <person name="Ou J.-H."/>
            <person name="Ware C.F."/>
            <person name="Lai M.M.C."/>
        </authorList>
    </citation>
    <scope>INTERACTION WITH HOST LTBR (MATURE CORE PROTEIN)</scope>
</reference>
<reference key="5">
    <citation type="journal article" date="1998" name="J. Virol.">
        <title>Hepatitis C virus core protein binds to the cytoplasmic domain of tumor necrosis factor (TNF) receptor 1 and enhances TNF-induced apoptosis.</title>
        <authorList>
            <person name="Zhu N."/>
            <person name="Khoshnan A."/>
            <person name="Schneider R."/>
            <person name="Matsumoto M."/>
            <person name="Dennert G."/>
            <person name="Ware C.F."/>
            <person name="Lai M.M.C."/>
        </authorList>
    </citation>
    <scope>INTERACTION WITH HOST TNFRSF1A (MATURE CORE PROTEIN)</scope>
</reference>
<reference key="6">
    <citation type="journal article" date="1998" name="J. Biol. Chem.">
        <title>Hepatitis C virus core protein interacts with heterogeneous nuclear ribonucleoprotein K.</title>
        <authorList>
            <person name="Hsieh T.-Y."/>
            <person name="Matsumoto M."/>
            <person name="Chou H.-C."/>
            <person name="Schneider R."/>
            <person name="Hwang S.B."/>
            <person name="Lee A.S."/>
            <person name="Lai M.M.C."/>
        </authorList>
    </citation>
    <scope>INTERACTION WITH HUMAN HNRPK (MATURE CORE PROTEIN)</scope>
</reference>
<reference key="7">
    <citation type="journal article" date="1999" name="Hepatology">
        <title>Hepatitis C virus core protein binds to apolipoprotein AII and its secretion is modulated by fibrates.</title>
        <authorList>
            <person name="Sabile A."/>
            <person name="Perlemuter G."/>
            <person name="Bono F."/>
            <person name="Kohara K."/>
            <person name="Demaugre F."/>
            <person name="Kohara M."/>
            <person name="Matsuura Y."/>
            <person name="Miyamura T."/>
            <person name="Brechot C."/>
            <person name="Barba G."/>
        </authorList>
    </citation>
    <scope>INTERACTION WITH HOST APOA2 (MATURE CORE PROTEIN)</scope>
</reference>
<reference key="8">
    <citation type="journal article" date="2000" name="J. Virol.">
        <title>Hepatitis C virus core protein interacts with 14-3-3 protein and activates the kinase Raf-1.</title>
        <authorList>
            <person name="Aoki H."/>
            <person name="Hayashi J."/>
            <person name="Moriyama M."/>
            <person name="Arakawa Y."/>
            <person name="Hino O."/>
        </authorList>
    </citation>
    <scope>INTERACTION WITH HOST YWHAE (MATURE CORE PROTEIN)</scope>
</reference>
<reference key="9">
    <citation type="journal article" date="2000" name="EMBO J.">
        <title>Hepatitis C virus core protein-induced loss of LZIP function correlates with cellular transformation.</title>
        <authorList>
            <person name="Jin D.-Y."/>
            <person name="Wang H.-L."/>
            <person name="Zhou Y."/>
            <person name="Chun A.C.S."/>
            <person name="Kibler K.V."/>
            <person name="Hou Y.-D."/>
            <person name="Kung H.-F."/>
            <person name="Jeang K.-T."/>
        </authorList>
    </citation>
    <scope>INTERACTION WITH HOST CREB3 (MATURE CORE PROTEIN)</scope>
</reference>
<reference key="10">
    <citation type="journal article" date="2002" name="J. Exp. Med.">
        <title>Activation of STAT3 by the hepatitis C virus core protein leads to cellular transformation.</title>
        <authorList>
            <person name="Yoshida T."/>
            <person name="Hanada T."/>
            <person name="Tokuhisa T."/>
            <person name="Kosai K."/>
            <person name="Sata M."/>
            <person name="Kohara M."/>
            <person name="Yoshimura A."/>
        </authorList>
    </citation>
    <scope>INTERACTION WITH HOST STAT3 (MATURE CORE PROTEIN)</scope>
    <scope>FUNCTION (MATURE CORE PROTEIN)</scope>
</reference>
<reference key="11">
    <citation type="journal article" date="2002" name="Hepatology">
        <title>Interaction of hepatitis C virus core protein with retinoid X receptor alpha modulates its transcriptional activity.</title>
        <authorList>
            <person name="Tsutsumi T."/>
            <person name="Suzuki T."/>
            <person name="Shimoike T."/>
            <person name="Suzuki R."/>
            <person name="Moriya K."/>
            <person name="Shintani Y."/>
            <person name="Fujie H."/>
            <person name="Matsuura Y."/>
            <person name="Koike K."/>
            <person name="Miyamura T."/>
        </authorList>
    </citation>
    <scope>INTERACTION WITH HOST RXRA (MATURE CORE PROTEIN)</scope>
</reference>
<reference key="12">
    <citation type="journal article" date="2000" name="J. Viral Hepat.">
        <title>Properties of the hepatitis C virus core protein: a structural protein that modulates cellular processes.</title>
        <authorList>
            <person name="McLauchlan J."/>
        </authorList>
    </citation>
    <scope>REVIEW</scope>
</reference>
<reference key="13">
    <citation type="journal article" date="2004" name="Hepatology">
        <title>Structural biology of hepatitis C virus.</title>
        <authorList>
            <person name="Penin F."/>
            <person name="Dubuisson J."/>
            <person name="Rey F.A."/>
            <person name="Moradpour D."/>
            <person name="Pawlotsky J.-M."/>
        </authorList>
    </citation>
    <scope>REVIEW</scope>
</reference>
<reference key="14">
    <citation type="journal article" date="2007" name="J. Virol.">
        <title>An RNA-binding protein, hnRNP A1, and a scaffold protein, septin 6, facilitate hepatitis C virus replication.</title>
        <authorList>
            <person name="Kim C.S."/>
            <person name="Seol S.K."/>
            <person name="Song O.-K."/>
            <person name="Park J.H."/>
            <person name="Jang S.K."/>
        </authorList>
    </citation>
    <scope>INTERACTION WITH HOST HNRNPA1 (RNA-DIRECTED RNA POLYMERASE)</scope>
    <scope>INTERACTION WITH HOST SEPT6 (RNA-DIRECTED RNA POLYMERASE)</scope>
</reference>
<reference key="15">
    <citation type="journal article" date="2003" name="J. Immunol.">
        <title>Crystal structure of a hydrophobic immunodominant antigenic site on hepatitis C virus core protein complexed to monoclonal antibody 19D9D6.</title>
        <authorList>
            <person name="Menez R."/>
            <person name="Bossus M."/>
            <person name="Muller B.H."/>
            <person name="Sibai G."/>
            <person name="Dalbon P."/>
            <person name="Ducancel F."/>
            <person name="Jolivet-Reynaud C."/>
            <person name="Stura E.A."/>
        </authorList>
    </citation>
    <scope>X-RAY CRYSTALLOGRAPHY (2.34 ANGSTROMS) OF 25-40 IN COMPLEX WITH A MONOCLONAL ANTIBODY</scope>
</reference>